<dbReference type="EMBL" id="X83006">
    <property type="protein sequence ID" value="CAA58127.1"/>
    <property type="molecule type" value="mRNA"/>
</dbReference>
<dbReference type="EMBL" id="X99133">
    <property type="protein sequence ID" value="CAA67574.1"/>
    <property type="molecule type" value="Genomic_DNA"/>
</dbReference>
<dbReference type="EMBL" id="AK301694">
    <property type="protein sequence ID" value="BAG63166.1"/>
    <property type="molecule type" value="mRNA"/>
</dbReference>
<dbReference type="EMBL" id="AK316217">
    <property type="protein sequence ID" value="BAH14588.1"/>
    <property type="molecule type" value="mRNA"/>
</dbReference>
<dbReference type="EMBL" id="CR542092">
    <property type="protein sequence ID" value="CAG46889.1"/>
    <property type="molecule type" value="mRNA"/>
</dbReference>
<dbReference type="EMBL" id="AL590708">
    <property type="status" value="NOT_ANNOTATED_CDS"/>
    <property type="molecule type" value="Genomic_DNA"/>
</dbReference>
<dbReference type="EMBL" id="CH471090">
    <property type="protein sequence ID" value="EAW87750.1"/>
    <property type="molecule type" value="Genomic_DNA"/>
</dbReference>
<dbReference type="EMBL" id="BC033089">
    <property type="protein sequence ID" value="AAH33089.1"/>
    <property type="molecule type" value="mRNA"/>
</dbReference>
<dbReference type="EMBL" id="S75256">
    <property type="protein sequence ID" value="AAD14168.1"/>
    <property type="molecule type" value="mRNA"/>
</dbReference>
<dbReference type="CCDS" id="CCDS6892.1">
    <molecule id="P80188-1"/>
</dbReference>
<dbReference type="PIR" id="JC2339">
    <property type="entry name" value="JC2339"/>
</dbReference>
<dbReference type="RefSeq" id="NP_005555.2">
    <molecule id="P80188-1"/>
    <property type="nucleotide sequence ID" value="NM_005564.4"/>
</dbReference>
<dbReference type="RefSeq" id="XP_047279332.1">
    <molecule id="P80188-1"/>
    <property type="nucleotide sequence ID" value="XM_047423376.1"/>
</dbReference>
<dbReference type="RefSeq" id="XP_054218938.1">
    <molecule id="P80188-1"/>
    <property type="nucleotide sequence ID" value="XM_054362963.1"/>
</dbReference>
<dbReference type="PDB" id="1DFV">
    <property type="method" value="X-ray"/>
    <property type="resolution" value="2.60 A"/>
    <property type="chains" value="A/B=21-197"/>
</dbReference>
<dbReference type="PDB" id="1L6M">
    <property type="method" value="X-ray"/>
    <property type="resolution" value="2.40 A"/>
    <property type="chains" value="A/B/C=21-198"/>
</dbReference>
<dbReference type="PDB" id="1NGL">
    <property type="method" value="NMR"/>
    <property type="chains" value="A=21-198"/>
</dbReference>
<dbReference type="PDB" id="1QQS">
    <property type="method" value="X-ray"/>
    <property type="resolution" value="2.40 A"/>
    <property type="chains" value="A=24-197"/>
</dbReference>
<dbReference type="PDB" id="1X71">
    <property type="method" value="X-ray"/>
    <property type="resolution" value="2.10 A"/>
    <property type="chains" value="A/B/C=21-198"/>
</dbReference>
<dbReference type="PDB" id="1X89">
    <property type="method" value="X-ray"/>
    <property type="resolution" value="2.10 A"/>
    <property type="chains" value="A/B/C=21-198"/>
</dbReference>
<dbReference type="PDB" id="1X8U">
    <property type="method" value="X-ray"/>
    <property type="resolution" value="2.20 A"/>
    <property type="chains" value="A/B/C=21-198"/>
</dbReference>
<dbReference type="PDB" id="3BY0">
    <property type="method" value="X-ray"/>
    <property type="resolution" value="2.57 A"/>
    <property type="chains" value="A/B/C=1-198"/>
</dbReference>
<dbReference type="PDB" id="3CBC">
    <property type="method" value="X-ray"/>
    <property type="resolution" value="2.17 A"/>
    <property type="chains" value="A/B/C=1-198"/>
</dbReference>
<dbReference type="PDB" id="3CMP">
    <property type="method" value="X-ray"/>
    <property type="resolution" value="2.80 A"/>
    <property type="chains" value="A/B/C=1-198"/>
</dbReference>
<dbReference type="PDB" id="3DSZ">
    <property type="method" value="X-ray"/>
    <property type="resolution" value="2.00 A"/>
    <property type="chains" value="A/B=21-198"/>
</dbReference>
<dbReference type="PDB" id="3DTQ">
    <property type="method" value="X-ray"/>
    <property type="resolution" value="2.50 A"/>
    <property type="chains" value="A/B/C=21-198"/>
</dbReference>
<dbReference type="PDB" id="3FW4">
    <property type="method" value="X-ray"/>
    <property type="resolution" value="2.30 A"/>
    <property type="chains" value="A/B/C=21-198"/>
</dbReference>
<dbReference type="PDB" id="3FW5">
    <property type="method" value="X-ray"/>
    <property type="resolution" value="2.30 A"/>
    <property type="chains" value="A/B/C=21-198"/>
</dbReference>
<dbReference type="PDB" id="3HWD">
    <property type="method" value="X-ray"/>
    <property type="resolution" value="2.95 A"/>
    <property type="chains" value="A/B/C=1-198"/>
</dbReference>
<dbReference type="PDB" id="3HWE">
    <property type="method" value="X-ray"/>
    <property type="resolution" value="2.80 A"/>
    <property type="chains" value="A/B/C=1-198"/>
</dbReference>
<dbReference type="PDB" id="3HWF">
    <property type="method" value="X-ray"/>
    <property type="resolution" value="3.20 A"/>
    <property type="chains" value="A/B/C=1-198"/>
</dbReference>
<dbReference type="PDB" id="3HWG">
    <property type="method" value="X-ray"/>
    <property type="resolution" value="2.19 A"/>
    <property type="chains" value="A/B/C=1-198"/>
</dbReference>
<dbReference type="PDB" id="3I0A">
    <property type="method" value="X-ray"/>
    <property type="resolution" value="2.60 A"/>
    <property type="chains" value="A/B/C=1-198"/>
</dbReference>
<dbReference type="PDB" id="3K3L">
    <property type="method" value="X-ray"/>
    <property type="resolution" value="2.62 A"/>
    <property type="chains" value="A/B/C=21-198"/>
</dbReference>
<dbReference type="PDB" id="3PEC">
    <property type="method" value="X-ray"/>
    <property type="resolution" value="2.19 A"/>
    <property type="chains" value="A/B/C=21-198"/>
</dbReference>
<dbReference type="PDB" id="3PED">
    <property type="method" value="X-ray"/>
    <property type="resolution" value="2.30 A"/>
    <property type="chains" value="A/B/C=21-198"/>
</dbReference>
<dbReference type="PDB" id="3T1D">
    <property type="method" value="X-ray"/>
    <property type="resolution" value="2.30 A"/>
    <property type="chains" value="A/B/C=1-198"/>
</dbReference>
<dbReference type="PDB" id="3TF6">
    <property type="method" value="X-ray"/>
    <property type="resolution" value="2.35 A"/>
    <property type="chains" value="A/B/C=21-198"/>
</dbReference>
<dbReference type="PDB" id="3TZS">
    <property type="method" value="X-ray"/>
    <property type="resolution" value="2.45 A"/>
    <property type="chains" value="A/B/C=21-198"/>
</dbReference>
<dbReference type="PDB" id="3U0D">
    <property type="method" value="X-ray"/>
    <property type="resolution" value="2.51 A"/>
    <property type="chains" value="A/B/C/D=1-198"/>
</dbReference>
<dbReference type="PDB" id="4GH7">
    <property type="method" value="X-ray"/>
    <property type="resolution" value="2.60 A"/>
    <property type="chains" value="A/C=21-198"/>
</dbReference>
<dbReference type="PDB" id="4IAW">
    <property type="method" value="X-ray"/>
    <property type="resolution" value="2.40 A"/>
    <property type="chains" value="A/B/C=21-198"/>
</dbReference>
<dbReference type="PDB" id="4IAX">
    <property type="method" value="X-ray"/>
    <property type="resolution" value="1.90 A"/>
    <property type="chains" value="A=21-198"/>
</dbReference>
<dbReference type="PDB" id="4K19">
    <property type="method" value="X-ray"/>
    <property type="resolution" value="2.74 A"/>
    <property type="chains" value="A/B/C=21-198"/>
</dbReference>
<dbReference type="PDB" id="4MVI">
    <property type="method" value="X-ray"/>
    <property type="resolution" value="1.70 A"/>
    <property type="chains" value="A=21-198"/>
</dbReference>
<dbReference type="PDB" id="4MVK">
    <property type="method" value="X-ray"/>
    <property type="resolution" value="1.50 A"/>
    <property type="chains" value="A=21-198"/>
</dbReference>
<dbReference type="PDB" id="4MVL">
    <property type="method" value="X-ray"/>
    <property type="resolution" value="2.30 A"/>
    <property type="chains" value="A/B/C/D=21-198"/>
</dbReference>
<dbReference type="PDB" id="4QAE">
    <property type="method" value="X-ray"/>
    <property type="resolution" value="2.10 A"/>
    <property type="chains" value="A/B/C/D/E/F=21-198"/>
</dbReference>
<dbReference type="PDB" id="4ZFX">
    <property type="method" value="X-ray"/>
    <property type="resolution" value="2.55 A"/>
    <property type="chains" value="A/B/C=21-198"/>
</dbReference>
<dbReference type="PDB" id="4ZHC">
    <property type="method" value="X-ray"/>
    <property type="resolution" value="2.04 A"/>
    <property type="chains" value="A/B/C=21-198"/>
</dbReference>
<dbReference type="PDB" id="4ZHD">
    <property type="method" value="X-ray"/>
    <property type="resolution" value="2.05 A"/>
    <property type="chains" value="A/B/C=21-198"/>
</dbReference>
<dbReference type="PDB" id="4ZHF">
    <property type="method" value="X-ray"/>
    <property type="resolution" value="2.45 A"/>
    <property type="chains" value="A/B/C/D/E/F=21-198"/>
</dbReference>
<dbReference type="PDB" id="4ZHG">
    <property type="method" value="X-ray"/>
    <property type="resolution" value="2.05 A"/>
    <property type="chains" value="A/B/C/D/E/F=21-198"/>
</dbReference>
<dbReference type="PDB" id="4ZHH">
    <property type="method" value="X-ray"/>
    <property type="resolution" value="2.04 A"/>
    <property type="chains" value="A/B/C/D/E/F=21-198"/>
</dbReference>
<dbReference type="PDB" id="5JR8">
    <property type="method" value="X-ray"/>
    <property type="resolution" value="2.65 A"/>
    <property type="chains" value="A/B=21-198"/>
</dbReference>
<dbReference type="PDB" id="5KHP">
    <property type="method" value="X-ray"/>
    <property type="resolution" value="2.65 A"/>
    <property type="chains" value="A/B/C=21-198"/>
</dbReference>
<dbReference type="PDB" id="5KIC">
    <property type="method" value="X-ray"/>
    <property type="resolution" value="2.70 A"/>
    <property type="chains" value="A/B/C=21-198"/>
</dbReference>
<dbReference type="PDB" id="5KID">
    <property type="method" value="X-ray"/>
    <property type="resolution" value="2.15 A"/>
    <property type="chains" value="A/B/C=21-198"/>
</dbReference>
<dbReference type="PDB" id="5MHH">
    <property type="method" value="X-ray"/>
    <property type="resolution" value="2.00 A"/>
    <property type="chains" value="A=21-198"/>
</dbReference>
<dbReference type="PDB" id="5N47">
    <property type="method" value="X-ray"/>
    <property type="resolution" value="3.00 A"/>
    <property type="chains" value="A/C/E=21-198"/>
</dbReference>
<dbReference type="PDB" id="5N48">
    <property type="method" value="X-ray"/>
    <property type="resolution" value="1.60 A"/>
    <property type="chains" value="A/C=21-198"/>
</dbReference>
<dbReference type="PDB" id="5NKN">
    <property type="method" value="X-ray"/>
    <property type="resolution" value="2.20 A"/>
    <property type="chains" value="A=25-198"/>
</dbReference>
<dbReference type="PDB" id="6GQZ">
    <property type="method" value="X-ray"/>
    <property type="resolution" value="1.40 A"/>
    <property type="chains" value="A/B=25-198"/>
</dbReference>
<dbReference type="PDB" id="6GR0">
    <property type="method" value="X-ray"/>
    <property type="resolution" value="2.50 A"/>
    <property type="chains" value="A/B/C=25-198"/>
</dbReference>
<dbReference type="PDB" id="6O5D">
    <property type="method" value="X-ray"/>
    <property type="resolution" value="2.40 A"/>
    <property type="chains" value="A/B/C=25-198"/>
</dbReference>
<dbReference type="PDB" id="6QMU">
    <property type="method" value="X-ray"/>
    <property type="resolution" value="1.98 A"/>
    <property type="chains" value="A/B=21-198"/>
</dbReference>
<dbReference type="PDB" id="6S8V">
    <property type="method" value="X-ray"/>
    <property type="resolution" value="1.80 A"/>
    <property type="chains" value="A/C=21-198"/>
</dbReference>
<dbReference type="PDB" id="6SUA">
    <property type="method" value="X-ray"/>
    <property type="resolution" value="2.75 A"/>
    <property type="chains" value="A/C=21-198"/>
</dbReference>
<dbReference type="PDB" id="6Z2C">
    <property type="method" value="X-ray"/>
    <property type="resolution" value="1.80 A"/>
    <property type="chains" value="A/B/C=21-198"/>
</dbReference>
<dbReference type="PDB" id="6Z6Z">
    <property type="method" value="X-ray"/>
    <property type="resolution" value="1.78 A"/>
    <property type="chains" value="A=21-198"/>
</dbReference>
<dbReference type="PDB" id="8UYN">
    <property type="method" value="X-ray"/>
    <property type="resolution" value="2.00 A"/>
    <property type="chains" value="A/B/C=21-198"/>
</dbReference>
<dbReference type="PDB" id="8UZ9">
    <property type="method" value="X-ray"/>
    <property type="resolution" value="2.08 A"/>
    <property type="chains" value="A/B/C=21-198"/>
</dbReference>
<dbReference type="PDBsum" id="1DFV"/>
<dbReference type="PDBsum" id="1L6M"/>
<dbReference type="PDBsum" id="1NGL"/>
<dbReference type="PDBsum" id="1QQS"/>
<dbReference type="PDBsum" id="1X71"/>
<dbReference type="PDBsum" id="1X89"/>
<dbReference type="PDBsum" id="1X8U"/>
<dbReference type="PDBsum" id="3BY0"/>
<dbReference type="PDBsum" id="3CBC"/>
<dbReference type="PDBsum" id="3CMP"/>
<dbReference type="PDBsum" id="3DSZ"/>
<dbReference type="PDBsum" id="3DTQ"/>
<dbReference type="PDBsum" id="3FW4"/>
<dbReference type="PDBsum" id="3FW5"/>
<dbReference type="PDBsum" id="3HWD"/>
<dbReference type="PDBsum" id="3HWE"/>
<dbReference type="PDBsum" id="3HWF"/>
<dbReference type="PDBsum" id="3HWG"/>
<dbReference type="PDBsum" id="3I0A"/>
<dbReference type="PDBsum" id="3K3L"/>
<dbReference type="PDBsum" id="3PEC"/>
<dbReference type="PDBsum" id="3PED"/>
<dbReference type="PDBsum" id="3T1D"/>
<dbReference type="PDBsum" id="3TF6"/>
<dbReference type="PDBsum" id="3TZS"/>
<dbReference type="PDBsum" id="3U0D"/>
<dbReference type="PDBsum" id="4GH7"/>
<dbReference type="PDBsum" id="4IAW"/>
<dbReference type="PDBsum" id="4IAX"/>
<dbReference type="PDBsum" id="4K19"/>
<dbReference type="PDBsum" id="4MVI"/>
<dbReference type="PDBsum" id="4MVK"/>
<dbReference type="PDBsum" id="4MVL"/>
<dbReference type="PDBsum" id="4QAE"/>
<dbReference type="PDBsum" id="4ZFX"/>
<dbReference type="PDBsum" id="4ZHC"/>
<dbReference type="PDBsum" id="4ZHD"/>
<dbReference type="PDBsum" id="4ZHF"/>
<dbReference type="PDBsum" id="4ZHG"/>
<dbReference type="PDBsum" id="4ZHH"/>
<dbReference type="PDBsum" id="5JR8"/>
<dbReference type="PDBsum" id="5KHP"/>
<dbReference type="PDBsum" id="5KIC"/>
<dbReference type="PDBsum" id="5KID"/>
<dbReference type="PDBsum" id="5MHH"/>
<dbReference type="PDBsum" id="5N47"/>
<dbReference type="PDBsum" id="5N48"/>
<dbReference type="PDBsum" id="5NKN"/>
<dbReference type="PDBsum" id="6GQZ"/>
<dbReference type="PDBsum" id="6GR0"/>
<dbReference type="PDBsum" id="6O5D"/>
<dbReference type="PDBsum" id="6QMU"/>
<dbReference type="PDBsum" id="6S8V"/>
<dbReference type="PDBsum" id="6SUA"/>
<dbReference type="PDBsum" id="6Z2C"/>
<dbReference type="PDBsum" id="6Z6Z"/>
<dbReference type="PDBsum" id="8UYN"/>
<dbReference type="PDBsum" id="8UZ9"/>
<dbReference type="BMRB" id="P80188"/>
<dbReference type="EMDB" id="EMD-15210"/>
<dbReference type="SMR" id="P80188"/>
<dbReference type="BioGRID" id="110126">
    <property type="interactions" value="208"/>
</dbReference>
<dbReference type="DIP" id="DIP-29952N"/>
<dbReference type="FunCoup" id="P80188">
    <property type="interactions" value="491"/>
</dbReference>
<dbReference type="IntAct" id="P80188">
    <property type="interactions" value="154"/>
</dbReference>
<dbReference type="MINT" id="P80188"/>
<dbReference type="STRING" id="9606.ENSP00000362108"/>
<dbReference type="BindingDB" id="P80188"/>
<dbReference type="DrugBank" id="DB02710">
    <property type="generic name" value="2,3,-Dihydroxybenzoylserine"/>
</dbReference>
<dbReference type="DrugBank" id="DB01672">
    <property type="generic name" value="2,3-Dihydroxy-Benzoic Acid"/>
</dbReference>
<dbReference type="DrugBank" id="DB01926">
    <property type="generic name" value="Carboxymycobactin S"/>
</dbReference>
<dbReference type="DrugBank" id="DB04043">
    <property type="generic name" value="Carboxymycobactin T"/>
</dbReference>
<dbReference type="DrugBank" id="DB01631">
    <property type="generic name" value="Methyl nonanoate"/>
</dbReference>
<dbReference type="DrugBank" id="DB04476">
    <property type="generic name" value="Trencam-3,2-Hopo"/>
</dbReference>
<dbReference type="MoonDB" id="P80188">
    <property type="type" value="Predicted"/>
</dbReference>
<dbReference type="GlyConnect" id="1565">
    <property type="glycosylation" value="6 N-Linked glycans (1 site)"/>
</dbReference>
<dbReference type="GlyCosmos" id="P80188">
    <property type="glycosylation" value="1 site, 8 glycans"/>
</dbReference>
<dbReference type="GlyGen" id="P80188">
    <property type="glycosylation" value="1 site, 23 N-linked glycans (1 site)"/>
</dbReference>
<dbReference type="iPTMnet" id="P80188"/>
<dbReference type="PhosphoSitePlus" id="P80188"/>
<dbReference type="SwissPalm" id="P80188"/>
<dbReference type="BioMuta" id="LCN2"/>
<dbReference type="DMDM" id="1171700"/>
<dbReference type="CPTAC" id="CPTAC-681"/>
<dbReference type="jPOST" id="P80188"/>
<dbReference type="MassIVE" id="P80188"/>
<dbReference type="PaxDb" id="9606-ENSP00000362108"/>
<dbReference type="PeptideAtlas" id="P80188"/>
<dbReference type="PRIDE" id="P80188"/>
<dbReference type="ProteomicsDB" id="57669">
    <molecule id="P80188-1"/>
</dbReference>
<dbReference type="ProteomicsDB" id="57670">
    <molecule id="P80188-2"/>
</dbReference>
<dbReference type="Pumba" id="P80188"/>
<dbReference type="ABCD" id="P80188">
    <property type="antibodies" value="2 sequenced antibodies"/>
</dbReference>
<dbReference type="Antibodypedia" id="1059">
    <property type="antibodies" value="1810 antibodies from 48 providers"/>
</dbReference>
<dbReference type="DNASU" id="3934"/>
<dbReference type="Ensembl" id="ENST00000277480.7">
    <molecule id="P80188-1"/>
    <property type="protein sequence ID" value="ENSP00000277480.2"/>
    <property type="gene ID" value="ENSG00000148346.12"/>
</dbReference>
<dbReference type="Ensembl" id="ENST00000373017.5">
    <molecule id="P80188-1"/>
    <property type="protein sequence ID" value="ENSP00000362108.1"/>
    <property type="gene ID" value="ENSG00000148346.12"/>
</dbReference>
<dbReference type="GeneID" id="3934"/>
<dbReference type="KEGG" id="hsa:3934"/>
<dbReference type="MANE-Select" id="ENST00000277480.7">
    <property type="protein sequence ID" value="ENSP00000277480.2"/>
    <property type="RefSeq nucleotide sequence ID" value="NM_005564.5"/>
    <property type="RefSeq protein sequence ID" value="NP_005555.2"/>
</dbReference>
<dbReference type="UCSC" id="uc004bto.1">
    <molecule id="P80188-1"/>
    <property type="organism name" value="human"/>
</dbReference>
<dbReference type="AGR" id="HGNC:6526"/>
<dbReference type="CTD" id="3934"/>
<dbReference type="DisGeNET" id="3934"/>
<dbReference type="GeneCards" id="LCN2"/>
<dbReference type="HGNC" id="HGNC:6526">
    <property type="gene designation" value="LCN2"/>
</dbReference>
<dbReference type="HPA" id="ENSG00000148346">
    <property type="expression patterns" value="Tissue enhanced (bone marrow, gallbladder, salivary gland)"/>
</dbReference>
<dbReference type="MIM" id="600181">
    <property type="type" value="gene"/>
</dbReference>
<dbReference type="neXtProt" id="NX_P80188"/>
<dbReference type="OpenTargets" id="ENSG00000148346"/>
<dbReference type="PharmGKB" id="PA30309"/>
<dbReference type="VEuPathDB" id="HostDB:ENSG00000148346"/>
<dbReference type="eggNOG" id="ENOG502T7VZ">
    <property type="taxonomic scope" value="Eukaryota"/>
</dbReference>
<dbReference type="GeneTree" id="ENSGT01050000244868"/>
<dbReference type="InParanoid" id="P80188"/>
<dbReference type="OMA" id="IDKCIDD"/>
<dbReference type="OrthoDB" id="9048943at2759"/>
<dbReference type="PAN-GO" id="P80188">
    <property type="GO annotations" value="1 GO annotation based on evolutionary models"/>
</dbReference>
<dbReference type="PhylomeDB" id="P80188"/>
<dbReference type="TreeFam" id="TF336103"/>
<dbReference type="PathwayCommons" id="P80188"/>
<dbReference type="Reactome" id="R-HSA-6785807">
    <property type="pathway name" value="Interleukin-4 and Interleukin-13 signaling"/>
</dbReference>
<dbReference type="Reactome" id="R-HSA-6798695">
    <property type="pathway name" value="Neutrophil degranulation"/>
</dbReference>
<dbReference type="Reactome" id="R-HSA-6799990">
    <property type="pathway name" value="Metal sequestration by antimicrobial proteins"/>
</dbReference>
<dbReference type="Reactome" id="R-HSA-917937">
    <property type="pathway name" value="Iron uptake and transport"/>
</dbReference>
<dbReference type="SignaLink" id="P80188"/>
<dbReference type="SIGNOR" id="P80188"/>
<dbReference type="BioGRID-ORCS" id="3934">
    <property type="hits" value="18 hits in 1156 CRISPR screens"/>
</dbReference>
<dbReference type="ChiTaRS" id="LCN2">
    <property type="organism name" value="human"/>
</dbReference>
<dbReference type="EvolutionaryTrace" id="P80188"/>
<dbReference type="GeneWiki" id="LCN2"/>
<dbReference type="GenomeRNAi" id="3934"/>
<dbReference type="Pharos" id="P80188">
    <property type="development level" value="Tbio"/>
</dbReference>
<dbReference type="PRO" id="PR:P80188"/>
<dbReference type="Proteomes" id="UP000005640">
    <property type="component" value="Chromosome 9"/>
</dbReference>
<dbReference type="RNAct" id="P80188">
    <property type="molecule type" value="protein"/>
</dbReference>
<dbReference type="Bgee" id="ENSG00000148346">
    <property type="expression patterns" value="Expressed in palpebral conjunctiva and 147 other cell types or tissues"/>
</dbReference>
<dbReference type="ExpressionAtlas" id="P80188">
    <property type="expression patterns" value="baseline and differential"/>
</dbReference>
<dbReference type="GO" id="GO:0070062">
    <property type="term" value="C:extracellular exosome"/>
    <property type="evidence" value="ECO:0007005"/>
    <property type="project" value="UniProtKB"/>
</dbReference>
<dbReference type="GO" id="GO:0005576">
    <property type="term" value="C:extracellular region"/>
    <property type="evidence" value="ECO:0007005"/>
    <property type="project" value="BHF-UCL"/>
</dbReference>
<dbReference type="GO" id="GO:0005615">
    <property type="term" value="C:extracellular space"/>
    <property type="evidence" value="ECO:0000314"/>
    <property type="project" value="UniProtKB"/>
</dbReference>
<dbReference type="GO" id="GO:0035580">
    <property type="term" value="C:specific granule lumen"/>
    <property type="evidence" value="ECO:0000304"/>
    <property type="project" value="Reactome"/>
</dbReference>
<dbReference type="GO" id="GO:1903981">
    <property type="term" value="F:enterobactin binding"/>
    <property type="evidence" value="ECO:0000314"/>
    <property type="project" value="UniProtKB"/>
</dbReference>
<dbReference type="GO" id="GO:0042802">
    <property type="term" value="F:identical protein binding"/>
    <property type="evidence" value="ECO:0000353"/>
    <property type="project" value="IntAct"/>
</dbReference>
<dbReference type="GO" id="GO:0005506">
    <property type="term" value="F:iron ion binding"/>
    <property type="evidence" value="ECO:0000314"/>
    <property type="project" value="UniProtKB"/>
</dbReference>
<dbReference type="GO" id="GO:0140315">
    <property type="term" value="F:iron ion sequestering activity"/>
    <property type="evidence" value="ECO:0000314"/>
    <property type="project" value="UniProtKB"/>
</dbReference>
<dbReference type="GO" id="GO:0002020">
    <property type="term" value="F:protease binding"/>
    <property type="evidence" value="ECO:0007669"/>
    <property type="project" value="Ensembl"/>
</dbReference>
<dbReference type="GO" id="GO:0006953">
    <property type="term" value="P:acute-phase response"/>
    <property type="evidence" value="ECO:0007669"/>
    <property type="project" value="Ensembl"/>
</dbReference>
<dbReference type="GO" id="GO:1904646">
    <property type="term" value="P:cellular response to amyloid-beta"/>
    <property type="evidence" value="ECO:0007669"/>
    <property type="project" value="Ensembl"/>
</dbReference>
<dbReference type="GO" id="GO:0070301">
    <property type="term" value="P:cellular response to hydrogen peroxide"/>
    <property type="evidence" value="ECO:0007669"/>
    <property type="project" value="Ensembl"/>
</dbReference>
<dbReference type="GO" id="GO:0071456">
    <property type="term" value="P:cellular response to hypoxia"/>
    <property type="evidence" value="ECO:0007669"/>
    <property type="project" value="Ensembl"/>
</dbReference>
<dbReference type="GO" id="GO:0036295">
    <property type="term" value="P:cellular response to increased oxygen levels"/>
    <property type="evidence" value="ECO:0007669"/>
    <property type="project" value="Ensembl"/>
</dbReference>
<dbReference type="GO" id="GO:0071347">
    <property type="term" value="P:cellular response to interleukin-1"/>
    <property type="evidence" value="ECO:0007669"/>
    <property type="project" value="Ensembl"/>
</dbReference>
<dbReference type="GO" id="GO:0071354">
    <property type="term" value="P:cellular response to interleukin-6"/>
    <property type="evidence" value="ECO:0007669"/>
    <property type="project" value="Ensembl"/>
</dbReference>
<dbReference type="GO" id="GO:0071222">
    <property type="term" value="P:cellular response to lipopolysaccharide"/>
    <property type="evidence" value="ECO:0007669"/>
    <property type="project" value="Ensembl"/>
</dbReference>
<dbReference type="GO" id="GO:1990090">
    <property type="term" value="P:cellular response to nerve growth factor stimulus"/>
    <property type="evidence" value="ECO:0007669"/>
    <property type="project" value="Ensembl"/>
</dbReference>
<dbReference type="GO" id="GO:0031669">
    <property type="term" value="P:cellular response to nutrient levels"/>
    <property type="evidence" value="ECO:0007669"/>
    <property type="project" value="Ensembl"/>
</dbReference>
<dbReference type="GO" id="GO:0071356">
    <property type="term" value="P:cellular response to tumor necrosis factor"/>
    <property type="evidence" value="ECO:0007669"/>
    <property type="project" value="Ensembl"/>
</dbReference>
<dbReference type="GO" id="GO:0071481">
    <property type="term" value="P:cellular response to X-ray"/>
    <property type="evidence" value="ECO:0007669"/>
    <property type="project" value="Ensembl"/>
</dbReference>
<dbReference type="GO" id="GO:0042742">
    <property type="term" value="P:defense response to bacterium"/>
    <property type="evidence" value="ECO:0000314"/>
    <property type="project" value="UniProtKB"/>
</dbReference>
<dbReference type="GO" id="GO:0097192">
    <property type="term" value="P:extrinsic apoptotic signaling pathway in absence of ligand"/>
    <property type="evidence" value="ECO:0007669"/>
    <property type="project" value="Ensembl"/>
</dbReference>
<dbReference type="GO" id="GO:0045087">
    <property type="term" value="P:innate immune response"/>
    <property type="evidence" value="ECO:0000250"/>
    <property type="project" value="UniProtKB"/>
</dbReference>
<dbReference type="GO" id="GO:0007616">
    <property type="term" value="P:long-term memory"/>
    <property type="evidence" value="ECO:0007669"/>
    <property type="project" value="Ensembl"/>
</dbReference>
<dbReference type="GO" id="GO:0110091">
    <property type="term" value="P:negative regulation of hippocampal neuron apoptotic process"/>
    <property type="evidence" value="ECO:0007669"/>
    <property type="project" value="Ensembl"/>
</dbReference>
<dbReference type="GO" id="GO:0031346">
    <property type="term" value="P:positive regulation of cell projection organization"/>
    <property type="evidence" value="ECO:0007669"/>
    <property type="project" value="Ensembl"/>
</dbReference>
<dbReference type="GO" id="GO:0120162">
    <property type="term" value="P:positive regulation of cold-induced thermogenesis"/>
    <property type="evidence" value="ECO:0000250"/>
    <property type="project" value="YuBioLab"/>
</dbReference>
<dbReference type="GO" id="GO:0010595">
    <property type="term" value="P:positive regulation of endothelial cell migration"/>
    <property type="evidence" value="ECO:0007669"/>
    <property type="project" value="Ensembl"/>
</dbReference>
<dbReference type="GO" id="GO:1905956">
    <property type="term" value="P:positive regulation of endothelial tube morphogenesis"/>
    <property type="evidence" value="ECO:0007669"/>
    <property type="project" value="Ensembl"/>
</dbReference>
<dbReference type="GO" id="GO:0010628">
    <property type="term" value="P:positive regulation of gene expression"/>
    <property type="evidence" value="ECO:0007669"/>
    <property type="project" value="Ensembl"/>
</dbReference>
<dbReference type="GO" id="GO:0110090">
    <property type="term" value="P:positive regulation of hippocampal neuron apoptotic process"/>
    <property type="evidence" value="ECO:0007669"/>
    <property type="project" value="Ensembl"/>
</dbReference>
<dbReference type="GO" id="GO:1904440">
    <property type="term" value="P:positive regulation of iron ion import across plasma membrane"/>
    <property type="evidence" value="ECO:0007669"/>
    <property type="project" value="Ensembl"/>
</dbReference>
<dbReference type="GO" id="GO:1903428">
    <property type="term" value="P:positive regulation of reactive oxygen species biosynthetic process"/>
    <property type="evidence" value="ECO:0007669"/>
    <property type="project" value="Ensembl"/>
</dbReference>
<dbReference type="GO" id="GO:0009637">
    <property type="term" value="P:response to blue light"/>
    <property type="evidence" value="ECO:0007669"/>
    <property type="project" value="Ensembl"/>
</dbReference>
<dbReference type="GO" id="GO:0009750">
    <property type="term" value="P:response to fructose"/>
    <property type="evidence" value="ECO:0007669"/>
    <property type="project" value="Ensembl"/>
</dbReference>
<dbReference type="GO" id="GO:0009635">
    <property type="term" value="P:response to herbicide"/>
    <property type="evidence" value="ECO:0007669"/>
    <property type="project" value="Ensembl"/>
</dbReference>
<dbReference type="GO" id="GO:0010040">
    <property type="term" value="P:response to iron(II) ion"/>
    <property type="evidence" value="ECO:0007669"/>
    <property type="project" value="Ensembl"/>
</dbReference>
<dbReference type="GO" id="GO:1904373">
    <property type="term" value="P:response to kainic acid"/>
    <property type="evidence" value="ECO:0007669"/>
    <property type="project" value="Ensembl"/>
</dbReference>
<dbReference type="GO" id="GO:0010046">
    <property type="term" value="P:response to mycotoxin"/>
    <property type="evidence" value="ECO:0007669"/>
    <property type="project" value="Ensembl"/>
</dbReference>
<dbReference type="GO" id="GO:0009615">
    <property type="term" value="P:response to virus"/>
    <property type="evidence" value="ECO:0007669"/>
    <property type="project" value="Ensembl"/>
</dbReference>
<dbReference type="GO" id="GO:0009410">
    <property type="term" value="P:response to xenobiotic stimulus"/>
    <property type="evidence" value="ECO:0007669"/>
    <property type="project" value="Ensembl"/>
</dbReference>
<dbReference type="GO" id="GO:0007614">
    <property type="term" value="P:short-term memory"/>
    <property type="evidence" value="ECO:0007669"/>
    <property type="project" value="Ensembl"/>
</dbReference>
<dbReference type="GO" id="GO:0015891">
    <property type="term" value="P:siderophore transport"/>
    <property type="evidence" value="ECO:0000250"/>
    <property type="project" value="UniProtKB"/>
</dbReference>
<dbReference type="CDD" id="cd19457">
    <property type="entry name" value="lipocalin_2-like"/>
    <property type="match status" value="1"/>
</dbReference>
<dbReference type="FunFam" id="2.40.128.20:FF:000024">
    <property type="entry name" value="Neutrophil gelatinase-associated lipocalin"/>
    <property type="match status" value="1"/>
</dbReference>
<dbReference type="Gene3D" id="2.40.128.20">
    <property type="match status" value="1"/>
</dbReference>
<dbReference type="InterPro" id="IPR012674">
    <property type="entry name" value="Calycin"/>
</dbReference>
<dbReference type="InterPro" id="IPR003087">
    <property type="entry name" value="LCN2/LCN12"/>
</dbReference>
<dbReference type="InterPro" id="IPR002345">
    <property type="entry name" value="Lipocalin"/>
</dbReference>
<dbReference type="InterPro" id="IPR022272">
    <property type="entry name" value="Lipocalin_CS"/>
</dbReference>
<dbReference type="InterPro" id="IPR000566">
    <property type="entry name" value="Lipocln_cytosolic_FA-bd_dom"/>
</dbReference>
<dbReference type="PANTHER" id="PTHR11430">
    <property type="entry name" value="LIPOCALIN"/>
    <property type="match status" value="1"/>
</dbReference>
<dbReference type="PANTHER" id="PTHR11430:SF13">
    <property type="entry name" value="NEUTROPHIL GELATINASE-ASSOCIATED LIPOCALIN"/>
    <property type="match status" value="1"/>
</dbReference>
<dbReference type="Pfam" id="PF00061">
    <property type="entry name" value="Lipocalin"/>
    <property type="match status" value="1"/>
</dbReference>
<dbReference type="PRINTS" id="PR00179">
    <property type="entry name" value="LIPOCALIN"/>
</dbReference>
<dbReference type="PRINTS" id="PR01275">
    <property type="entry name" value="NGELATINASE"/>
</dbReference>
<dbReference type="SUPFAM" id="SSF50814">
    <property type="entry name" value="Lipocalins"/>
    <property type="match status" value="1"/>
</dbReference>
<dbReference type="PROSITE" id="PS00213">
    <property type="entry name" value="LIPOCALIN"/>
    <property type="match status" value="1"/>
</dbReference>
<accession>P80188</accession>
<accession>A6NII8</accession>
<accession>B4DWV4</accession>
<accession>B7ZAA2</accession>
<accession>P30150</accession>
<accession>Q5SYV9</accession>
<accession>Q5SYW0</accession>
<accession>Q6FGL5</accession>
<accession>Q92683</accession>
<comment type="function">
    <text evidence="1 5 8 13 14 15">Iron-trafficking protein involved in multiple processes such as apoptosis, innate immunity and renal development (PubMed:12453413, PubMed:20581821, PubMed:27780864). Binds iron through association with 2,3-dihydroxybenzoic acid (2,3-DHBA), a siderophore that shares structural similarities with bacterial enterobactin, and delivers or removes iron from the cell, depending on the context. Iron-bound form (holo-24p3) is internalized following binding to the SLC22A17 (24p3R) receptor, leading to release of iron and subsequent increase of intracellular iron concentration. In contrast, association of the iron-free form (apo-24p3) with the SLC22A17 (24p3R) receptor is followed by association with an intracellular siderophore, iron chelation and iron transfer to the extracellular medium, thereby reducing intracellular iron concentration. Involved in apoptosis due to interleukin-3 (IL3) deprivation: iron-loaded form increases intracellular iron concentration without promoting apoptosis, while iron-free form decreases intracellular iron levels, inducing expression of the proapoptotic protein BCL2L11/BIM, resulting in apoptosis (By similarity). Involved in innate immunity; limits bacterial proliferation by sequestering iron bound to microbial siderophores, such as enterobactin (PubMed:27780864). Can also bind siderophores from M.tuberculosis (PubMed:15642259, PubMed:21978368).</text>
</comment>
<comment type="subunit">
    <text evidence="4 6 17">Monomer (PubMed:1281792, PubMed:7683678). Homodimer; disulfide-linked (PubMed:7683678). Heterodimer; disulfide-linked with MMP9 (PubMed:7683678).</text>
</comment>
<comment type="interaction">
    <interactant intactId="EBI-11911016">
        <id>P80188</id>
    </interactant>
    <interactant intactId="EBI-11107920">
        <id>P49419-2</id>
        <label>ALDH7A1</label>
    </interactant>
    <organismsDiffer>false</organismsDiffer>
    <experiments>3</experiments>
</comment>
<comment type="interaction">
    <interactant intactId="EBI-11911016">
        <id>P80188</id>
    </interactant>
    <interactant intactId="EBI-8637516">
        <id>Q9NXW9</id>
        <label>ALKBH4</label>
    </interactant>
    <organismsDiffer>false</organismsDiffer>
    <experiments>3</experiments>
</comment>
<comment type="interaction">
    <interactant intactId="EBI-11911016">
        <id>P80188</id>
    </interactant>
    <interactant intactId="EBI-3923154">
        <id>Q8WXI3</id>
        <label>ASB10</label>
    </interactant>
    <organismsDiffer>false</organismsDiffer>
    <experiments>3</experiments>
</comment>
<comment type="interaction">
    <interactant intactId="EBI-11911016">
        <id>P80188</id>
    </interactant>
    <interactant intactId="EBI-12092171">
        <id>Q12797-6</id>
        <label>ASPH</label>
    </interactant>
    <organismsDiffer>false</organismsDiffer>
    <experiments>3</experiments>
</comment>
<comment type="interaction">
    <interactant intactId="EBI-11911016">
        <id>P80188</id>
    </interactant>
    <interactant intactId="EBI-745073">
        <id>Q9BXY8</id>
        <label>BEX2</label>
    </interactant>
    <organismsDiffer>false</organismsDiffer>
    <experiments>3</experiments>
</comment>
<comment type="interaction">
    <interactant intactId="EBI-11911016">
        <id>P80188</id>
    </interactant>
    <interactant intactId="EBI-3919268">
        <id>Q96LC9</id>
        <label>BMF</label>
    </interactant>
    <organismsDiffer>false</organismsDiffer>
    <experiments>3</experiments>
</comment>
<comment type="interaction">
    <interactant intactId="EBI-11911016">
        <id>P80188</id>
    </interactant>
    <interactant intactId="EBI-1748958">
        <id>P49069</id>
        <label>CAMLG</label>
    </interactant>
    <organismsDiffer>false</organismsDiffer>
    <experiments>3</experiments>
</comment>
<comment type="interaction">
    <interactant intactId="EBI-11911016">
        <id>P80188</id>
    </interactant>
    <interactant intactId="EBI-395261">
        <id>P24863</id>
        <label>CCNC</label>
    </interactant>
    <organismsDiffer>false</organismsDiffer>
    <experiments>4</experiments>
</comment>
<comment type="interaction">
    <interactant intactId="EBI-11911016">
        <id>P80188</id>
    </interactant>
    <interactant intactId="EBI-741528">
        <id>Q9UKJ5</id>
        <label>CHIC2</label>
    </interactant>
    <organismsDiffer>false</organismsDiffer>
    <experiments>3</experiments>
</comment>
<comment type="interaction">
    <interactant intactId="EBI-11911016">
        <id>P80188</id>
    </interactant>
    <interactant intactId="EBI-12155483">
        <id>Q9H1P6</id>
        <label>CIMIP1</label>
    </interactant>
    <organismsDiffer>false</organismsDiffer>
    <experiments>3</experiments>
</comment>
<comment type="interaction">
    <interactant intactId="EBI-11911016">
        <id>P80188</id>
    </interactant>
    <interactant intactId="EBI-4314260">
        <id>Q9H6B4</id>
        <label>CLMP</label>
    </interactant>
    <organismsDiffer>false</organismsDiffer>
    <experiments>3</experiments>
</comment>
<comment type="interaction">
    <interactant intactId="EBI-11911016">
        <id>P80188</id>
    </interactant>
    <interactant intactId="EBI-2802973">
        <id>O14595</id>
        <label>CTDSP2</label>
    </interactant>
    <organismsDiffer>false</organismsDiffer>
    <experiments>3</experiments>
</comment>
<comment type="interaction">
    <interactant intactId="EBI-11911016">
        <id>P80188</id>
    </interactant>
    <interactant intactId="EBI-2339219">
        <id>Q08426</id>
        <label>EHHADH</label>
    </interactant>
    <organismsDiffer>false</organismsDiffer>
    <experiments>3</experiments>
</comment>
<comment type="interaction">
    <interactant intactId="EBI-11911016">
        <id>P80188</id>
    </interactant>
    <interactant intactId="EBI-12013806">
        <id>Q6NZ36-4</id>
        <label>FAAP20</label>
    </interactant>
    <organismsDiffer>false</organismsDiffer>
    <experiments>3</experiments>
</comment>
<comment type="interaction">
    <interactant intactId="EBI-11911016">
        <id>P80188</id>
    </interactant>
    <interactant intactId="EBI-14240149">
        <id>B3EWG3</id>
        <label>FAM25A</label>
    </interactant>
    <organismsDiffer>false</organismsDiffer>
    <experiments>3</experiments>
</comment>
<comment type="interaction">
    <interactant intactId="EBI-11911016">
        <id>P80188</id>
    </interactant>
    <interactant intactId="EBI-6163836">
        <id>Q7Z4H3</id>
        <label>HDDC2</label>
    </interactant>
    <organismsDiffer>false</organismsDiffer>
    <experiments>3</experiments>
</comment>
<comment type="interaction">
    <interactant intactId="EBI-11911016">
        <id>P80188</id>
    </interactant>
    <interactant intactId="EBI-10250491">
        <id>Q6ISS4</id>
        <label>LAIR2</label>
    </interactant>
    <organismsDiffer>false</organismsDiffer>
    <experiments>3</experiments>
</comment>
<comment type="interaction">
    <interactant intactId="EBI-11911016">
        <id>P80188</id>
    </interactant>
    <interactant intactId="EBI-9394625">
        <id>Q5TA76</id>
        <label>LCE3A</label>
    </interactant>
    <organismsDiffer>false</organismsDiffer>
    <experiments>3</experiments>
</comment>
<comment type="interaction">
    <interactant intactId="EBI-11911016">
        <id>P80188</id>
    </interactant>
    <interactant intactId="EBI-11911016">
        <id>P80188</id>
        <label>LCN2</label>
    </interactant>
    <organismsDiffer>false</organismsDiffer>
    <experiments>4</experiments>
</comment>
<comment type="interaction">
    <interactant intactId="EBI-11911016">
        <id>P80188</id>
    </interactant>
    <interactant intactId="EBI-12133176">
        <id>Q9UIQ6-2</id>
        <label>LNPEP</label>
    </interactant>
    <organismsDiffer>false</organismsDiffer>
    <experiments>3</experiments>
</comment>
<comment type="interaction">
    <interactant intactId="EBI-11911016">
        <id>P80188</id>
    </interactant>
    <interactant intactId="EBI-1539247">
        <id>Q9Y6Y9</id>
        <label>LY96</label>
    </interactant>
    <organismsDiffer>false</organismsDiffer>
    <experiments>3</experiments>
</comment>
<comment type="interaction">
    <interactant intactId="EBI-11911016">
        <id>P80188</id>
    </interactant>
    <interactant intactId="EBI-721864">
        <id>Q96JG8</id>
        <label>MAGED4</label>
    </interactant>
    <organismsDiffer>false</organismsDiffer>
    <experiments>3</experiments>
</comment>
<comment type="interaction">
    <interactant intactId="EBI-11911016">
        <id>P80188</id>
    </interactant>
    <interactant intactId="EBI-10699187">
        <id>Q8IXL7-2</id>
        <label>MSRB3</label>
    </interactant>
    <organismsDiffer>false</organismsDiffer>
    <experiments>3</experiments>
</comment>
<comment type="interaction">
    <interactant intactId="EBI-11911016">
        <id>P80188</id>
    </interactant>
    <interactant intactId="EBI-718622">
        <id>Q969H8</id>
        <label>MYDGF</label>
    </interactant>
    <organismsDiffer>false</organismsDiffer>
    <experiments>3</experiments>
</comment>
<comment type="interaction">
    <interactant intactId="EBI-11911016">
        <id>P80188</id>
    </interactant>
    <interactant intactId="EBI-10281234">
        <id>Q969S2</id>
        <label>NEIL2</label>
    </interactant>
    <organismsDiffer>false</organismsDiffer>
    <experiments>3</experiments>
</comment>
<comment type="interaction">
    <interactant intactId="EBI-11911016">
        <id>P80188</id>
    </interactant>
    <interactant intactId="EBI-10239029">
        <id>Q17RF5</id>
        <label>ODAPH</label>
    </interactant>
    <organismsDiffer>false</organismsDiffer>
    <experiments>3</experiments>
</comment>
<comment type="interaction">
    <interactant intactId="EBI-11911016">
        <id>P80188</id>
    </interactant>
    <interactant intactId="EBI-395883">
        <id>P07237</id>
        <label>P4HB</label>
    </interactant>
    <organismsDiffer>false</organismsDiffer>
    <experiments>3</experiments>
</comment>
<comment type="interaction">
    <interactant intactId="EBI-11911016">
        <id>P80188</id>
    </interactant>
    <interactant intactId="EBI-1054653">
        <id>P13667</id>
        <label>PDIA4</label>
    </interactant>
    <organismsDiffer>false</organismsDiffer>
    <experiments>3</experiments>
</comment>
<comment type="interaction">
    <interactant intactId="EBI-11911016">
        <id>P80188</id>
    </interactant>
    <interactant intactId="EBI-448369">
        <id>Q96FA3</id>
        <label>PELI1</label>
    </interactant>
    <organismsDiffer>false</organismsDiffer>
    <experiments>3</experiments>
</comment>
<comment type="interaction">
    <interactant intactId="EBI-11911016">
        <id>P80188</id>
    </interactant>
    <interactant intactId="EBI-79165">
        <id>Q9NRD5</id>
        <label>PICK1</label>
    </interactant>
    <organismsDiffer>false</organismsDiffer>
    <experiments>3</experiments>
</comment>
<comment type="interaction">
    <interactant intactId="EBI-11911016">
        <id>P80188</id>
    </interactant>
    <interactant intactId="EBI-714158">
        <id>Q13526</id>
        <label>PIN1</label>
    </interactant>
    <organismsDiffer>false</organismsDiffer>
    <experiments>3</experiments>
</comment>
<comment type="interaction">
    <interactant intactId="EBI-11911016">
        <id>P80188</id>
    </interactant>
    <interactant intactId="EBI-10320765">
        <id>Q9UGP5-2</id>
        <label>POLL</label>
    </interactant>
    <organismsDiffer>false</organismsDiffer>
    <experiments>3</experiments>
</comment>
<comment type="interaction">
    <interactant intactId="EBI-11911016">
        <id>P80188</id>
    </interactant>
    <interactant intactId="EBI-17236143">
        <id>Q12837</id>
        <label>POU4F2</label>
    </interactant>
    <organismsDiffer>false</organismsDiffer>
    <experiments>3</experiments>
</comment>
<comment type="interaction">
    <interactant intactId="EBI-11911016">
        <id>P80188</id>
    </interactant>
    <interactant intactId="EBI-1383852">
        <id>P54646</id>
        <label>PRKAA2</label>
    </interactant>
    <organismsDiffer>false</organismsDiffer>
    <experiments>3</experiments>
</comment>
<comment type="interaction">
    <interactant intactId="EBI-11911016">
        <id>P80188</id>
    </interactant>
    <interactant intactId="EBI-2602515">
        <id>Q86Y79</id>
        <label>PTRH1</label>
    </interactant>
    <organismsDiffer>false</organismsDiffer>
    <experiments>3</experiments>
</comment>
<comment type="interaction">
    <interactant intactId="EBI-11911016">
        <id>P80188</id>
    </interactant>
    <interactant intactId="EBI-9009040">
        <id>O60895</id>
        <label>RAMP2</label>
    </interactant>
    <organismsDiffer>false</organismsDiffer>
    <experiments>3</experiments>
</comment>
<comment type="interaction">
    <interactant intactId="EBI-11911016">
        <id>P80188</id>
    </interactant>
    <interactant intactId="EBI-748391">
        <id>Q9BWG6</id>
        <label>SCNM1</label>
    </interactant>
    <organismsDiffer>false</organismsDiffer>
    <experiments>3</experiments>
</comment>
<comment type="interaction">
    <interactant intactId="EBI-11911016">
        <id>P80188</id>
    </interactant>
    <interactant intactId="EBI-4402709">
        <id>P60059</id>
        <label>SEC61G</label>
    </interactant>
    <organismsDiffer>false</organismsDiffer>
    <experiments>3</experiments>
</comment>
<comment type="interaction">
    <interactant intactId="EBI-11911016">
        <id>P80188</id>
    </interactant>
    <interactant intactId="EBI-347996">
        <id>O43765</id>
        <label>SGTA</label>
    </interactant>
    <organismsDiffer>false</organismsDiffer>
    <experiments>5</experiments>
</comment>
<comment type="interaction">
    <interactant intactId="EBI-11911016">
        <id>P80188</id>
    </interactant>
    <interactant intactId="EBI-744081">
        <id>Q96EQ0</id>
        <label>SGTB</label>
    </interactant>
    <organismsDiffer>false</organismsDiffer>
    <experiments>3</experiments>
</comment>
<comment type="interaction">
    <interactant intactId="EBI-11911016">
        <id>P80188</id>
    </interactant>
    <interactant intactId="EBI-12018146">
        <id>Q8IYX1</id>
        <label>TBC1D21</label>
    </interactant>
    <organismsDiffer>false</organismsDiffer>
    <experiments>3</experiments>
</comment>
<comment type="interaction">
    <interactant intactId="EBI-11911016">
        <id>P80188</id>
    </interactant>
    <interactant intactId="EBI-11119202">
        <id>Q9UL33-2</id>
        <label>TRAPPC2L</label>
    </interactant>
    <organismsDiffer>false</organismsDiffer>
    <experiments>3</experiments>
</comment>
<comment type="interaction">
    <interactant intactId="EBI-11911016">
        <id>P80188</id>
    </interactant>
    <interactant intactId="EBI-12813975">
        <id>P20396</id>
        <label>TRH</label>
    </interactant>
    <organismsDiffer>false</organismsDiffer>
    <experiments>3</experiments>
</comment>
<comment type="interaction">
    <interactant intactId="EBI-11911016">
        <id>P80188</id>
    </interactant>
    <interactant intactId="EBI-2820212">
        <id>O43715</id>
        <label>TRIAP1</label>
    </interactant>
    <organismsDiffer>false</organismsDiffer>
    <experiments>3</experiments>
</comment>
<comment type="interaction">
    <interactant intactId="EBI-11911016">
        <id>P80188</id>
    </interactant>
    <interactant intactId="EBI-742790">
        <id>Q13049</id>
        <label>TRIM32</label>
    </interactant>
    <organismsDiffer>false</organismsDiffer>
    <experiments>3</experiments>
</comment>
<comment type="interaction">
    <interactant intactId="EBI-11911016">
        <id>P80188</id>
    </interactant>
    <interactant intactId="EBI-346882">
        <id>Q99816</id>
        <label>TSG101</label>
    </interactant>
    <organismsDiffer>false</organismsDiffer>
    <experiments>3</experiments>
</comment>
<comment type="interaction">
    <interactant intactId="EBI-11911016">
        <id>P80188</id>
    </interactant>
    <interactant intactId="EBI-9090990">
        <id>Q5W5X9-3</id>
        <label>TTC23</label>
    </interactant>
    <organismsDiffer>false</organismsDiffer>
    <experiments>3</experiments>
</comment>
<comment type="interaction">
    <interactant intactId="EBI-11911016">
        <id>P80188</id>
    </interactant>
    <interactant intactId="EBI-2932492">
        <id>Q99757</id>
        <label>TXN2</label>
    </interactant>
    <organismsDiffer>false</organismsDiffer>
    <experiments>3</experiments>
</comment>
<comment type="interaction">
    <interactant intactId="EBI-11911016">
        <id>P80188</id>
    </interactant>
    <interactant intactId="EBI-7353612">
        <id>P57075-2</id>
        <label>UBASH3A</label>
    </interactant>
    <organismsDiffer>false</organismsDiffer>
    <experiments>3</experiments>
</comment>
<comment type="interaction">
    <interactant intactId="EBI-11911016">
        <id>P80188</id>
    </interactant>
    <interactant intactId="EBI-1056876">
        <id>Q969M7</id>
        <label>UBE2F</label>
    </interactant>
    <organismsDiffer>false</organismsDiffer>
    <experiments>3</experiments>
</comment>
<comment type="interaction">
    <interactant intactId="EBI-11911016">
        <id>P80188</id>
    </interactant>
    <interactant intactId="EBI-741480">
        <id>Q9UMX0</id>
        <label>UBQLN1</label>
    </interactant>
    <organismsDiffer>false</organismsDiffer>
    <experiments>3</experiments>
</comment>
<comment type="interaction">
    <interactant intactId="EBI-11911016">
        <id>P80188</id>
    </interactant>
    <interactant intactId="EBI-947187">
        <id>Q9UHD9</id>
        <label>UBQLN2</label>
    </interactant>
    <organismsDiffer>false</organismsDiffer>
    <experiments>5</experiments>
</comment>
<comment type="interaction">
    <interactant intactId="EBI-11911016">
        <id>P80188</id>
    </interactant>
    <interactant intactId="EBI-6622053">
        <id>P15692-12</id>
        <label>VEGFA</label>
    </interactant>
    <organismsDiffer>false</organismsDiffer>
    <experiments>3</experiments>
</comment>
<comment type="interaction">
    <interactant intactId="EBI-11911016">
        <id>P80188</id>
    </interactant>
    <interactant intactId="EBI-11980193">
        <id>Q14119</id>
        <label>VEZF1</label>
    </interactant>
    <organismsDiffer>false</organismsDiffer>
    <experiments>3</experiments>
</comment>
<comment type="interaction">
    <interactant intactId="EBI-11911016">
        <id>P80188</id>
    </interactant>
    <interactant intactId="EBI-12369705">
        <id>Q9Y6T4</id>
        <label>WUGSC:H_DJ0726N20.gs.b</label>
    </interactant>
    <organismsDiffer>false</organismsDiffer>
    <experiments>3</experiments>
</comment>
<comment type="interaction">
    <interactant intactId="EBI-11911016">
        <id>P80188</id>
    </interactant>
    <interactant intactId="EBI-372110">
        <id>Q9H0D6</id>
        <label>XRN2</label>
    </interactant>
    <organismsDiffer>false</organismsDiffer>
    <experiments>3</experiments>
</comment>
<comment type="interaction">
    <interactant intactId="EBI-11911016">
        <id>P80188</id>
    </interactant>
    <interactant intactId="EBI-740037">
        <id>O96006</id>
        <label>ZBED1</label>
    </interactant>
    <organismsDiffer>false</organismsDiffer>
    <experiments>3</experiments>
</comment>
<comment type="interaction">
    <interactant intactId="EBI-11911016">
        <id>P80188</id>
    </interactant>
    <interactant intactId="EBI-17234977">
        <id>A0A1U9X8X8</id>
    </interactant>
    <organismsDiffer>false</organismsDiffer>
    <experiments>3</experiments>
</comment>
<comment type="subcellular location">
    <subcellularLocation>
        <location evidence="5 15 17">Secreted</location>
    </subcellularLocation>
    <subcellularLocation>
        <location evidence="18">Cytoplasmic granule lumen</location>
    </subcellularLocation>
    <subcellularLocation>
        <location evidence="5">Cytoplasmic vesicle lumen</location>
    </subcellularLocation>
    <text evidence="1 5 13">Upon binding to the SLC22A17 (24p3R) receptor, it is internalized (By similarity). Releases the bound iron in the acidic lumen of cytoplasmic vesicles (PubMed:12453413, PubMed:20581821).</text>
</comment>
<comment type="alternative products">
    <event type="alternative splicing"/>
    <isoform>
        <id>P80188-1</id>
        <name>1</name>
        <sequence type="displayed"/>
    </isoform>
    <isoform>
        <id>P80188-2</id>
        <name>2</name>
        <sequence type="described" ref="VSP_039780"/>
    </isoform>
</comment>
<comment type="tissue specificity">
    <text evidence="16 17 18 19">Detected in neutrophils (at protein level) (PubMed:7683678, PubMed:8298140). Expressed in bone marrow and in tissues that are prone to exposure to microorganism (PubMed:9339356). High expression is found in bone marrow as well as in uterus, prostate, salivary gland, stomach, appendix, colon, trachea and lung (PubMed:9339356). Expressed in the medullary tubules of the kidney (PubMed:30418175). Not found in the small intestine or peripheral blood leukocytes (PubMed:9339356).</text>
</comment>
<comment type="induction">
    <text evidence="12 16">Expression is activated by the oncoprotein BCR-ABL; BCR-ABL misregulates expression via the JAK/STAT pathway and binding of STAT5A to the promoter (PubMed:19229297). Induced by insulin (PubMed:30418175).</text>
</comment>
<comment type="similarity">
    <text evidence="26">Belongs to the calycin superfamily. Lipocalin family.</text>
</comment>
<protein>
    <recommendedName>
        <fullName evidence="25">Neutrophil gelatinase-associated lipocalin</fullName>
        <shortName>NGAL</shortName>
    </recommendedName>
    <alternativeName>
        <fullName evidence="20">25 kDa alpha-2-microglobulin-related subunit of MMP-9</fullName>
    </alternativeName>
    <alternativeName>
        <fullName>Lipocalin-2</fullName>
    </alternativeName>
    <alternativeName>
        <fullName>Oncogene 24p3</fullName>
    </alternativeName>
    <alternativeName>
        <fullName evidence="22 23">Siderocalin</fullName>
    </alternativeName>
    <alternativeName>
        <fullName>p25</fullName>
    </alternativeName>
</protein>
<proteinExistence type="evidence at protein level"/>
<keyword id="KW-0002">3D-structure</keyword>
<keyword id="KW-0025">Alternative splicing</keyword>
<keyword id="KW-0053">Apoptosis</keyword>
<keyword id="KW-0968">Cytoplasmic vesicle</keyword>
<keyword id="KW-0903">Direct protein sequencing</keyword>
<keyword id="KW-1015">Disulfide bond</keyword>
<keyword id="KW-0325">Glycoprotein</keyword>
<keyword id="KW-0391">Immunity</keyword>
<keyword id="KW-0399">Innate immunity</keyword>
<keyword id="KW-0406">Ion transport</keyword>
<keyword id="KW-0408">Iron</keyword>
<keyword id="KW-0410">Iron transport</keyword>
<keyword id="KW-1267">Proteomics identification</keyword>
<keyword id="KW-0873">Pyrrolidone carboxylic acid</keyword>
<keyword id="KW-1185">Reference proteome</keyword>
<keyword id="KW-0964">Secreted</keyword>
<keyword id="KW-0732">Signal</keyword>
<keyword id="KW-0813">Transport</keyword>
<sequence>MPLGLLWLGLALLGALHAQAQDSTSDLIPAPPLSKVPLQQNFQDNQFQGKWYVVGLAGNAILREDKDPQKMYATIYELKEDKSYNVTSVLFRKKKCDYWIRTFVPGCQPGEFTLGNIKSYPGLTSYLVRVVSTNYNQHAMVFFKKVSQNREYFKITLYGRTKELTSELKENFIRFSKSLGLPENHIVFPVPIDQCIDG</sequence>
<evidence type="ECO:0000250" key="1">
    <source>
        <dbReference type="UniProtKB" id="P11672"/>
    </source>
</evidence>
<evidence type="ECO:0000269" key="2">
    <source>
    </source>
</evidence>
<evidence type="ECO:0000269" key="3">
    <source>
    </source>
</evidence>
<evidence type="ECO:0000269" key="4">
    <source>
    </source>
</evidence>
<evidence type="ECO:0000269" key="5">
    <source>
    </source>
</evidence>
<evidence type="ECO:0000269" key="6">
    <source>
    </source>
</evidence>
<evidence type="ECO:0000269" key="7">
    <source>
    </source>
</evidence>
<evidence type="ECO:0000269" key="8">
    <source>
    </source>
</evidence>
<evidence type="ECO:0000269" key="9">
    <source>
    </source>
</evidence>
<evidence type="ECO:0000269" key="10">
    <source>
    </source>
</evidence>
<evidence type="ECO:0000269" key="11">
    <source>
    </source>
</evidence>
<evidence type="ECO:0000269" key="12">
    <source>
    </source>
</evidence>
<evidence type="ECO:0000269" key="13">
    <source>
    </source>
</evidence>
<evidence type="ECO:0000269" key="14">
    <source>
    </source>
</evidence>
<evidence type="ECO:0000269" key="15">
    <source>
    </source>
</evidence>
<evidence type="ECO:0000269" key="16">
    <source>
    </source>
</evidence>
<evidence type="ECO:0000269" key="17">
    <source>
    </source>
</evidence>
<evidence type="ECO:0000269" key="18">
    <source>
    </source>
</evidence>
<evidence type="ECO:0000269" key="19">
    <source>
    </source>
</evidence>
<evidence type="ECO:0000303" key="20">
    <source>
    </source>
</evidence>
<evidence type="ECO:0000303" key="21">
    <source>
    </source>
</evidence>
<evidence type="ECO:0000303" key="22">
    <source>
    </source>
</evidence>
<evidence type="ECO:0000303" key="23">
    <source>
    </source>
</evidence>
<evidence type="ECO:0000303" key="24">
    <source>
    </source>
</evidence>
<evidence type="ECO:0000303" key="25">
    <source>
    </source>
</evidence>
<evidence type="ECO:0000305" key="26"/>
<evidence type="ECO:0007744" key="27">
    <source>
        <dbReference type="PDB" id="1DFV"/>
    </source>
</evidence>
<evidence type="ECO:0007744" key="28">
    <source>
        <dbReference type="PDB" id="1L6M"/>
    </source>
</evidence>
<evidence type="ECO:0007744" key="29">
    <source>
        <dbReference type="PDB" id="1NGL"/>
    </source>
</evidence>
<evidence type="ECO:0007744" key="30">
    <source>
        <dbReference type="PDB" id="1QQS"/>
    </source>
</evidence>
<evidence type="ECO:0007744" key="31">
    <source>
        <dbReference type="PDB" id="1X71"/>
    </source>
</evidence>
<evidence type="ECO:0007744" key="32">
    <source>
        <dbReference type="PDB" id="1X89"/>
    </source>
</evidence>
<evidence type="ECO:0007744" key="33">
    <source>
        <dbReference type="PDB" id="1X8U"/>
    </source>
</evidence>
<evidence type="ECO:0007744" key="34">
    <source>
        <dbReference type="PDB" id="3BY0"/>
    </source>
</evidence>
<evidence type="ECO:0007744" key="35">
    <source>
        <dbReference type="PDB" id="3CBC"/>
    </source>
</evidence>
<evidence type="ECO:0007744" key="36">
    <source>
        <dbReference type="PDB" id="3CMP"/>
    </source>
</evidence>
<evidence type="ECO:0007744" key="37">
    <source>
        <dbReference type="PDB" id="3DSZ"/>
    </source>
</evidence>
<evidence type="ECO:0007744" key="38">
    <source>
        <dbReference type="PDB" id="3DTQ"/>
    </source>
</evidence>
<evidence type="ECO:0007744" key="39">
    <source>
        <dbReference type="PDB" id="3FW4"/>
    </source>
</evidence>
<evidence type="ECO:0007744" key="40">
    <source>
        <dbReference type="PDB" id="3FW5"/>
    </source>
</evidence>
<evidence type="ECO:0007744" key="41">
    <source>
        <dbReference type="PDB" id="3HWD"/>
    </source>
</evidence>
<evidence type="ECO:0007744" key="42">
    <source>
        <dbReference type="PDB" id="3HWE"/>
    </source>
</evidence>
<evidence type="ECO:0007744" key="43">
    <source>
        <dbReference type="PDB" id="3HWF"/>
    </source>
</evidence>
<evidence type="ECO:0007744" key="44">
    <source>
        <dbReference type="PDB" id="3HWG"/>
    </source>
</evidence>
<evidence type="ECO:0007744" key="45">
    <source>
        <dbReference type="PDB" id="3I0A"/>
    </source>
</evidence>
<evidence type="ECO:0007744" key="46">
    <source>
        <dbReference type="PDB" id="3K3L"/>
    </source>
</evidence>
<evidence type="ECO:0007744" key="47">
    <source>
        <dbReference type="PDB" id="3PEC"/>
    </source>
</evidence>
<evidence type="ECO:0007744" key="48">
    <source>
        <dbReference type="PDB" id="3PED"/>
    </source>
</evidence>
<evidence type="ECO:0007744" key="49">
    <source>
        <dbReference type="PDB" id="3T1D"/>
    </source>
</evidence>
<evidence type="ECO:0007744" key="50">
    <source>
        <dbReference type="PDB" id="3TF6"/>
    </source>
</evidence>
<evidence type="ECO:0007744" key="51">
    <source>
        <dbReference type="PDB" id="3TZS"/>
    </source>
</evidence>
<evidence type="ECO:0007744" key="52">
    <source>
        <dbReference type="PDB" id="3U0D"/>
    </source>
</evidence>
<evidence type="ECO:0007744" key="53">
    <source>
        <dbReference type="PDB" id="4GH7"/>
    </source>
</evidence>
<evidence type="ECO:0007744" key="54">
    <source>
        <dbReference type="PDB" id="4IAW"/>
    </source>
</evidence>
<evidence type="ECO:0007744" key="55">
    <source>
        <dbReference type="PDB" id="4IAX"/>
    </source>
</evidence>
<evidence type="ECO:0007744" key="56">
    <source>
        <dbReference type="PDB" id="4K19"/>
    </source>
</evidence>
<evidence type="ECO:0007744" key="57">
    <source>
        <dbReference type="PDB" id="4MVI"/>
    </source>
</evidence>
<evidence type="ECO:0007744" key="58">
    <source>
        <dbReference type="PDB" id="4MVK"/>
    </source>
</evidence>
<evidence type="ECO:0007744" key="59">
    <source>
        <dbReference type="PDB" id="4MVL"/>
    </source>
</evidence>
<evidence type="ECO:0007744" key="60">
    <source>
        <dbReference type="PDB" id="4QAE"/>
    </source>
</evidence>
<evidence type="ECO:0007744" key="61">
    <source>
        <dbReference type="PDB" id="4ZFX"/>
    </source>
</evidence>
<evidence type="ECO:0007744" key="62">
    <source>
        <dbReference type="PDB" id="4ZHC"/>
    </source>
</evidence>
<evidence type="ECO:0007744" key="63">
    <source>
        <dbReference type="PDB" id="4ZHD"/>
    </source>
</evidence>
<evidence type="ECO:0007744" key="64">
    <source>
        <dbReference type="PDB" id="4ZHF"/>
    </source>
</evidence>
<evidence type="ECO:0007744" key="65">
    <source>
        <dbReference type="PDB" id="4ZHG"/>
    </source>
</evidence>
<evidence type="ECO:0007744" key="66">
    <source>
        <dbReference type="PDB" id="4ZHH"/>
    </source>
</evidence>
<evidence type="ECO:0007744" key="67">
    <source>
        <dbReference type="PDB" id="5JR8"/>
    </source>
</evidence>
<evidence type="ECO:0007744" key="68">
    <source>
        <dbReference type="PDB" id="5KHP"/>
    </source>
</evidence>
<evidence type="ECO:0007744" key="69">
    <source>
        <dbReference type="PDB" id="5KIC"/>
    </source>
</evidence>
<evidence type="ECO:0007744" key="70">
    <source>
        <dbReference type="PDB" id="5KID"/>
    </source>
</evidence>
<evidence type="ECO:0007744" key="71">
    <source>
        <dbReference type="PDB" id="5MHH"/>
    </source>
</evidence>
<evidence type="ECO:0007744" key="72">
    <source>
        <dbReference type="PDB" id="5N47"/>
    </source>
</evidence>
<evidence type="ECO:0007744" key="73">
    <source>
        <dbReference type="PDB" id="5N48"/>
    </source>
</evidence>
<evidence type="ECO:0007744" key="74">
    <source>
        <dbReference type="PDB" id="5NKN"/>
    </source>
</evidence>
<evidence type="ECO:0007744" key="75">
    <source>
        <dbReference type="PDB" id="6O5D"/>
    </source>
</evidence>
<evidence type="ECO:0007829" key="76">
    <source>
        <dbReference type="PDB" id="1NGL"/>
    </source>
</evidence>
<evidence type="ECO:0007829" key="77">
    <source>
        <dbReference type="PDB" id="4MVK"/>
    </source>
</evidence>
<evidence type="ECO:0007829" key="78">
    <source>
        <dbReference type="PDB" id="6GQZ"/>
    </source>
</evidence>
<evidence type="ECO:0007829" key="79">
    <source>
        <dbReference type="PDB" id="6Z2C"/>
    </source>
</evidence>
<name>NGAL_HUMAN</name>
<feature type="signal peptide" evidence="17">
    <location>
        <begin position="1"/>
        <end position="20"/>
    </location>
</feature>
<feature type="chain" id="PRO_0000017933" description="Neutrophil gelatinase-associated lipocalin">
    <location>
        <begin position="21"/>
        <end position="198"/>
    </location>
</feature>
<feature type="binding site" evidence="32 33">
    <location>
        <begin position="72"/>
        <end position="74"/>
    </location>
    <ligand>
        <name>a carboxymycobactin</name>
        <dbReference type="ChEBI" id="CHEBI:178051"/>
    </ligand>
</feature>
<feature type="binding site" evidence="36">
    <location>
        <position position="126"/>
    </location>
    <ligand>
        <name>enterobactin</name>
        <dbReference type="ChEBI" id="CHEBI:77805"/>
    </ligand>
</feature>
<feature type="binding site" evidence="8 32 33">
    <location>
        <position position="145"/>
    </location>
    <ligand>
        <name>a carboxymycobactin</name>
        <dbReference type="ChEBI" id="CHEBI:178051"/>
    </ligand>
</feature>
<feature type="binding site" evidence="8 32 33">
    <location>
        <position position="154"/>
    </location>
    <ligand>
        <name>a carboxymycobactin</name>
        <dbReference type="ChEBI" id="CHEBI:178051"/>
    </ligand>
</feature>
<feature type="binding site" evidence="36">
    <location>
        <position position="154"/>
    </location>
    <ligand>
        <name>enterobactin</name>
        <dbReference type="ChEBI" id="CHEBI:77805"/>
    </ligand>
</feature>
<feature type="binding site" evidence="8 32 33">
    <location>
        <position position="158"/>
    </location>
    <ligand>
        <name>a carboxymycobactin</name>
        <dbReference type="ChEBI" id="CHEBI:178051"/>
    </ligand>
</feature>
<feature type="modified residue" description="Pyrrolidone carboxylic acid" evidence="17">
    <location>
        <position position="21"/>
    </location>
</feature>
<feature type="glycosylation site" description="N-linked (GlcNAc...) asparagine" evidence="3 7 9 10 11 17 27 30">
    <location>
        <position position="85"/>
    </location>
</feature>
<feature type="disulfide bond" evidence="2 3 4 27 28 29 30 31 32 33 34 35 36 37 38 39 40 41 42 43 44 45 46 47 48 49 50 51 52 53 54 55 56 57 58 59 60 61 62 63 64 65 66 67 68 69 70 71 72 73 74 75">
    <location>
        <begin position="96"/>
        <end position="195"/>
    </location>
</feature>
<feature type="splice variant" id="VSP_039780" description="In isoform 2." evidence="21">
    <original>DQCIDG</original>
    <variation>GNGQSG</variation>
    <location>
        <begin position="193"/>
        <end position="198"/>
    </location>
</feature>
<feature type="mutagenesis site" description="Strongly reduced affinity for catecholate-type ferric siderophores; when associated with A-154." evidence="13">
    <original>K</original>
    <variation>A</variation>
    <location>
        <position position="145"/>
    </location>
</feature>
<feature type="mutagenesis site" description="Strongly reduced affinity for catecholate-type ferric siderophores; when associated with A-145." evidence="13">
    <original>K</original>
    <variation>A</variation>
    <location>
        <position position="154"/>
    </location>
</feature>
<feature type="sequence conflict" description="In Ref. 3; BAG63166." evidence="26" ref="3">
    <original>G</original>
    <variation>R</variation>
    <location>
        <position position="9"/>
    </location>
</feature>
<feature type="sequence conflict" description="In Ref. 4; CAG46889." evidence="26" ref="4">
    <original>L</original>
    <variation>S</variation>
    <location>
        <position position="13"/>
    </location>
</feature>
<feature type="sequence conflict" description="In Ref. 10; AA sequence." evidence="26" ref="10">
    <original>K</original>
    <variation>N</variation>
    <location>
        <position position="82"/>
    </location>
</feature>
<feature type="sequence conflict" description="In Ref. 10; AA sequence." evidence="26" ref="10">
    <original>I</original>
    <variation>V</variation>
    <location>
        <position position="155"/>
    </location>
</feature>
<feature type="sequence conflict" description="In Ref. 2; CAA67574." evidence="26" ref="2">
    <original>S</original>
    <variation>Y</variation>
    <location>
        <position position="178"/>
    </location>
</feature>
<feature type="helix" evidence="78">
    <location>
        <begin position="33"/>
        <end position="35"/>
    </location>
</feature>
<feature type="helix" evidence="78">
    <location>
        <begin position="44"/>
        <end position="47"/>
    </location>
</feature>
<feature type="strand" evidence="78">
    <location>
        <begin position="49"/>
        <end position="60"/>
    </location>
</feature>
<feature type="strand" evidence="77">
    <location>
        <begin position="64"/>
        <end position="66"/>
    </location>
</feature>
<feature type="helix" evidence="79">
    <location>
        <begin position="67"/>
        <end position="70"/>
    </location>
</feature>
<feature type="strand" evidence="78">
    <location>
        <begin position="73"/>
        <end position="78"/>
    </location>
</feature>
<feature type="turn" evidence="76">
    <location>
        <begin position="80"/>
        <end position="82"/>
    </location>
</feature>
<feature type="strand" evidence="78">
    <location>
        <begin position="84"/>
        <end position="92"/>
    </location>
</feature>
<feature type="strand" evidence="78">
    <location>
        <begin position="95"/>
        <end position="105"/>
    </location>
</feature>
<feature type="strand" evidence="78">
    <location>
        <begin position="111"/>
        <end position="114"/>
    </location>
</feature>
<feature type="helix" evidence="78">
    <location>
        <begin position="117"/>
        <end position="119"/>
    </location>
</feature>
<feature type="strand" evidence="78">
    <location>
        <begin position="123"/>
        <end position="133"/>
    </location>
</feature>
<feature type="strand" evidence="78">
    <location>
        <begin position="135"/>
        <end position="147"/>
    </location>
</feature>
<feature type="strand" evidence="78">
    <location>
        <begin position="150"/>
        <end position="162"/>
    </location>
</feature>
<feature type="helix" evidence="78">
    <location>
        <begin position="166"/>
        <end position="178"/>
    </location>
</feature>
<feature type="helix" evidence="78">
    <location>
        <begin position="183"/>
        <end position="185"/>
    </location>
</feature>
<feature type="strand" evidence="78">
    <location>
        <begin position="193"/>
        <end position="195"/>
    </location>
</feature>
<reference key="1">
    <citation type="journal article" date="1994" name="Biochem. Biophys. Res. Commun.">
        <title>Molecular cloning and expression of a cDNA encoding NGAL: a lipocalin expressed in human neutrophils.</title>
        <authorList>
            <person name="Bundgaard J.R."/>
            <person name="Sengelov H."/>
            <person name="Borregaard N."/>
            <person name="Kjeldsen L."/>
        </authorList>
    </citation>
    <scope>NUCLEOTIDE SEQUENCE [MRNA] (ISOFORM 1)</scope>
</reference>
<reference key="2">
    <citation type="journal article" date="1997" name="Genomics">
        <title>Molecular characterization and pattern of tissue expression of the gene for neutrophil gelatinase-associated lipocalin from humans.</title>
        <authorList>
            <person name="Cowland J.B."/>
            <person name="Borregaard N."/>
        </authorList>
    </citation>
    <scope>NUCLEOTIDE SEQUENCE [GENOMIC DNA]</scope>
    <scope>TISSUE SPECIFICITY</scope>
    <source>
        <tissue>Bone marrow</tissue>
    </source>
</reference>
<reference key="3">
    <citation type="journal article" date="2004" name="Nat. Genet.">
        <title>Complete sequencing and characterization of 21,243 full-length human cDNAs.</title>
        <authorList>
            <person name="Ota T."/>
            <person name="Suzuki Y."/>
            <person name="Nishikawa T."/>
            <person name="Otsuki T."/>
            <person name="Sugiyama T."/>
            <person name="Irie R."/>
            <person name="Wakamatsu A."/>
            <person name="Hayashi K."/>
            <person name="Sato H."/>
            <person name="Nagai K."/>
            <person name="Kimura K."/>
            <person name="Makita H."/>
            <person name="Sekine M."/>
            <person name="Obayashi M."/>
            <person name="Nishi T."/>
            <person name="Shibahara T."/>
            <person name="Tanaka T."/>
            <person name="Ishii S."/>
            <person name="Yamamoto J."/>
            <person name="Saito K."/>
            <person name="Kawai Y."/>
            <person name="Isono Y."/>
            <person name="Nakamura Y."/>
            <person name="Nagahari K."/>
            <person name="Murakami K."/>
            <person name="Yasuda T."/>
            <person name="Iwayanagi T."/>
            <person name="Wagatsuma M."/>
            <person name="Shiratori A."/>
            <person name="Sudo H."/>
            <person name="Hosoiri T."/>
            <person name="Kaku Y."/>
            <person name="Kodaira H."/>
            <person name="Kondo H."/>
            <person name="Sugawara M."/>
            <person name="Takahashi M."/>
            <person name="Kanda K."/>
            <person name="Yokoi T."/>
            <person name="Furuya T."/>
            <person name="Kikkawa E."/>
            <person name="Omura Y."/>
            <person name="Abe K."/>
            <person name="Kamihara K."/>
            <person name="Katsuta N."/>
            <person name="Sato K."/>
            <person name="Tanikawa M."/>
            <person name="Yamazaki M."/>
            <person name="Ninomiya K."/>
            <person name="Ishibashi T."/>
            <person name="Yamashita H."/>
            <person name="Murakawa K."/>
            <person name="Fujimori K."/>
            <person name="Tanai H."/>
            <person name="Kimata M."/>
            <person name="Watanabe M."/>
            <person name="Hiraoka S."/>
            <person name="Chiba Y."/>
            <person name="Ishida S."/>
            <person name="Ono Y."/>
            <person name="Takiguchi S."/>
            <person name="Watanabe S."/>
            <person name="Yosida M."/>
            <person name="Hotuta T."/>
            <person name="Kusano J."/>
            <person name="Kanehori K."/>
            <person name="Takahashi-Fujii A."/>
            <person name="Hara H."/>
            <person name="Tanase T.-O."/>
            <person name="Nomura Y."/>
            <person name="Togiya S."/>
            <person name="Komai F."/>
            <person name="Hara R."/>
            <person name="Takeuchi K."/>
            <person name="Arita M."/>
            <person name="Imose N."/>
            <person name="Musashino K."/>
            <person name="Yuuki H."/>
            <person name="Oshima A."/>
            <person name="Sasaki N."/>
            <person name="Aotsuka S."/>
            <person name="Yoshikawa Y."/>
            <person name="Matsunawa H."/>
            <person name="Ichihara T."/>
            <person name="Shiohata N."/>
            <person name="Sano S."/>
            <person name="Moriya S."/>
            <person name="Momiyama H."/>
            <person name="Satoh N."/>
            <person name="Takami S."/>
            <person name="Terashima Y."/>
            <person name="Suzuki O."/>
            <person name="Nakagawa S."/>
            <person name="Senoh A."/>
            <person name="Mizoguchi H."/>
            <person name="Goto Y."/>
            <person name="Shimizu F."/>
            <person name="Wakebe H."/>
            <person name="Hishigaki H."/>
            <person name="Watanabe T."/>
            <person name="Sugiyama A."/>
            <person name="Takemoto M."/>
            <person name="Kawakami B."/>
            <person name="Yamazaki M."/>
            <person name="Watanabe K."/>
            <person name="Kumagai A."/>
            <person name="Itakura S."/>
            <person name="Fukuzumi Y."/>
            <person name="Fujimori Y."/>
            <person name="Komiyama M."/>
            <person name="Tashiro H."/>
            <person name="Tanigami A."/>
            <person name="Fujiwara T."/>
            <person name="Ono T."/>
            <person name="Yamada K."/>
            <person name="Fujii Y."/>
            <person name="Ozaki K."/>
            <person name="Hirao M."/>
            <person name="Ohmori Y."/>
            <person name="Kawabata A."/>
            <person name="Hikiji T."/>
            <person name="Kobatake N."/>
            <person name="Inagaki H."/>
            <person name="Ikema Y."/>
            <person name="Okamoto S."/>
            <person name="Okitani R."/>
            <person name="Kawakami T."/>
            <person name="Noguchi S."/>
            <person name="Itoh T."/>
            <person name="Shigeta K."/>
            <person name="Senba T."/>
            <person name="Matsumura K."/>
            <person name="Nakajima Y."/>
            <person name="Mizuno T."/>
            <person name="Morinaga M."/>
            <person name="Sasaki M."/>
            <person name="Togashi T."/>
            <person name="Oyama M."/>
            <person name="Hata H."/>
            <person name="Watanabe M."/>
            <person name="Komatsu T."/>
            <person name="Mizushima-Sugano J."/>
            <person name="Satoh T."/>
            <person name="Shirai Y."/>
            <person name="Takahashi Y."/>
            <person name="Nakagawa K."/>
            <person name="Okumura K."/>
            <person name="Nagase T."/>
            <person name="Nomura N."/>
            <person name="Kikuchi H."/>
            <person name="Masuho Y."/>
            <person name="Yamashita R."/>
            <person name="Nakai K."/>
            <person name="Yada T."/>
            <person name="Nakamura Y."/>
            <person name="Ohara O."/>
            <person name="Isogai T."/>
            <person name="Sugano S."/>
        </authorList>
    </citation>
    <scope>NUCLEOTIDE SEQUENCE [LARGE SCALE MRNA] (ISOFORM 2)</scope>
    <source>
        <tissue>Esophagus</tissue>
    </source>
</reference>
<reference key="4">
    <citation type="submission" date="2004-06" db="EMBL/GenBank/DDBJ databases">
        <title>Cloning of human full open reading frames in Gateway(TM) system entry vector (pDONR201).</title>
        <authorList>
            <person name="Ebert L."/>
            <person name="Schick M."/>
            <person name="Neubert P."/>
            <person name="Schatten R."/>
            <person name="Henze S."/>
            <person name="Korn B."/>
        </authorList>
    </citation>
    <scope>NUCLEOTIDE SEQUENCE [LARGE SCALE MRNA] (ISOFORM 1)</scope>
</reference>
<reference key="5">
    <citation type="journal article" date="2004" name="Nature">
        <title>DNA sequence and analysis of human chromosome 9.</title>
        <authorList>
            <person name="Humphray S.J."/>
            <person name="Oliver K."/>
            <person name="Hunt A.R."/>
            <person name="Plumb R.W."/>
            <person name="Loveland J.E."/>
            <person name="Howe K.L."/>
            <person name="Andrews T.D."/>
            <person name="Searle S."/>
            <person name="Hunt S.E."/>
            <person name="Scott C.E."/>
            <person name="Jones M.C."/>
            <person name="Ainscough R."/>
            <person name="Almeida J.P."/>
            <person name="Ambrose K.D."/>
            <person name="Ashwell R.I.S."/>
            <person name="Babbage A.K."/>
            <person name="Babbage S."/>
            <person name="Bagguley C.L."/>
            <person name="Bailey J."/>
            <person name="Banerjee R."/>
            <person name="Barker D.J."/>
            <person name="Barlow K.F."/>
            <person name="Bates K."/>
            <person name="Beasley H."/>
            <person name="Beasley O."/>
            <person name="Bird C.P."/>
            <person name="Bray-Allen S."/>
            <person name="Brown A.J."/>
            <person name="Brown J.Y."/>
            <person name="Burford D."/>
            <person name="Burrill W."/>
            <person name="Burton J."/>
            <person name="Carder C."/>
            <person name="Carter N.P."/>
            <person name="Chapman J.C."/>
            <person name="Chen Y."/>
            <person name="Clarke G."/>
            <person name="Clark S.Y."/>
            <person name="Clee C.M."/>
            <person name="Clegg S."/>
            <person name="Collier R.E."/>
            <person name="Corby N."/>
            <person name="Crosier M."/>
            <person name="Cummings A.T."/>
            <person name="Davies J."/>
            <person name="Dhami P."/>
            <person name="Dunn M."/>
            <person name="Dutta I."/>
            <person name="Dyer L.W."/>
            <person name="Earthrowl M.E."/>
            <person name="Faulkner L."/>
            <person name="Fleming C.J."/>
            <person name="Frankish A."/>
            <person name="Frankland J.A."/>
            <person name="French L."/>
            <person name="Fricker D.G."/>
            <person name="Garner P."/>
            <person name="Garnett J."/>
            <person name="Ghori J."/>
            <person name="Gilbert J.G.R."/>
            <person name="Glison C."/>
            <person name="Grafham D.V."/>
            <person name="Gribble S."/>
            <person name="Griffiths C."/>
            <person name="Griffiths-Jones S."/>
            <person name="Grocock R."/>
            <person name="Guy J."/>
            <person name="Hall R.E."/>
            <person name="Hammond S."/>
            <person name="Harley J.L."/>
            <person name="Harrison E.S.I."/>
            <person name="Hart E.A."/>
            <person name="Heath P.D."/>
            <person name="Henderson C.D."/>
            <person name="Hopkins B.L."/>
            <person name="Howard P.J."/>
            <person name="Howden P.J."/>
            <person name="Huckle E."/>
            <person name="Johnson C."/>
            <person name="Johnson D."/>
            <person name="Joy A.A."/>
            <person name="Kay M."/>
            <person name="Keenan S."/>
            <person name="Kershaw J.K."/>
            <person name="Kimberley A.M."/>
            <person name="King A."/>
            <person name="Knights A."/>
            <person name="Laird G.K."/>
            <person name="Langford C."/>
            <person name="Lawlor S."/>
            <person name="Leongamornlert D.A."/>
            <person name="Leversha M."/>
            <person name="Lloyd C."/>
            <person name="Lloyd D.M."/>
            <person name="Lovell J."/>
            <person name="Martin S."/>
            <person name="Mashreghi-Mohammadi M."/>
            <person name="Matthews L."/>
            <person name="McLaren S."/>
            <person name="McLay K.E."/>
            <person name="McMurray A."/>
            <person name="Milne S."/>
            <person name="Nickerson T."/>
            <person name="Nisbett J."/>
            <person name="Nordsiek G."/>
            <person name="Pearce A.V."/>
            <person name="Peck A.I."/>
            <person name="Porter K.M."/>
            <person name="Pandian R."/>
            <person name="Pelan S."/>
            <person name="Phillimore B."/>
            <person name="Povey S."/>
            <person name="Ramsey Y."/>
            <person name="Rand V."/>
            <person name="Scharfe M."/>
            <person name="Sehra H.K."/>
            <person name="Shownkeen R."/>
            <person name="Sims S.K."/>
            <person name="Skuce C.D."/>
            <person name="Smith M."/>
            <person name="Steward C.A."/>
            <person name="Swarbreck D."/>
            <person name="Sycamore N."/>
            <person name="Tester J."/>
            <person name="Thorpe A."/>
            <person name="Tracey A."/>
            <person name="Tromans A."/>
            <person name="Thomas D.W."/>
            <person name="Wall M."/>
            <person name="Wallis J.M."/>
            <person name="West A.P."/>
            <person name="Whitehead S.L."/>
            <person name="Willey D.L."/>
            <person name="Williams S.A."/>
            <person name="Wilming L."/>
            <person name="Wray P.W."/>
            <person name="Young L."/>
            <person name="Ashurst J.L."/>
            <person name="Coulson A."/>
            <person name="Blocker H."/>
            <person name="Durbin R.M."/>
            <person name="Sulston J.E."/>
            <person name="Hubbard T."/>
            <person name="Jackson M.J."/>
            <person name="Bentley D.R."/>
            <person name="Beck S."/>
            <person name="Rogers J."/>
            <person name="Dunham I."/>
        </authorList>
    </citation>
    <scope>NUCLEOTIDE SEQUENCE [LARGE SCALE GENOMIC DNA]</scope>
</reference>
<reference key="6">
    <citation type="submission" date="2005-07" db="EMBL/GenBank/DDBJ databases">
        <authorList>
            <person name="Mural R.J."/>
            <person name="Istrail S."/>
            <person name="Sutton G.G."/>
            <person name="Florea L."/>
            <person name="Halpern A.L."/>
            <person name="Mobarry C.M."/>
            <person name="Lippert R."/>
            <person name="Walenz B."/>
            <person name="Shatkay H."/>
            <person name="Dew I."/>
            <person name="Miller J.R."/>
            <person name="Flanigan M.J."/>
            <person name="Edwards N.J."/>
            <person name="Bolanos R."/>
            <person name="Fasulo D."/>
            <person name="Halldorsson B.V."/>
            <person name="Hannenhalli S."/>
            <person name="Turner R."/>
            <person name="Yooseph S."/>
            <person name="Lu F."/>
            <person name="Nusskern D.R."/>
            <person name="Shue B.C."/>
            <person name="Zheng X.H."/>
            <person name="Zhong F."/>
            <person name="Delcher A.L."/>
            <person name="Huson D.H."/>
            <person name="Kravitz S.A."/>
            <person name="Mouchard L."/>
            <person name="Reinert K."/>
            <person name="Remington K.A."/>
            <person name="Clark A.G."/>
            <person name="Waterman M.S."/>
            <person name="Eichler E.E."/>
            <person name="Adams M.D."/>
            <person name="Hunkapiller M.W."/>
            <person name="Myers E.W."/>
            <person name="Venter J.C."/>
        </authorList>
    </citation>
    <scope>NUCLEOTIDE SEQUENCE [LARGE SCALE GENOMIC DNA]</scope>
</reference>
<reference key="7">
    <citation type="journal article" date="2004" name="Genome Res.">
        <title>The status, quality, and expansion of the NIH full-length cDNA project: the Mammalian Gene Collection (MGC).</title>
        <authorList>
            <consortium name="The MGC Project Team"/>
        </authorList>
    </citation>
    <scope>NUCLEOTIDE SEQUENCE [LARGE SCALE MRNA] (ISOFORM 1)</scope>
    <source>
        <tissue>Pancreas</tissue>
    </source>
</reference>
<reference key="8">
    <citation type="journal article" date="1995" name="FEBS Lett.">
        <title>Cloning and expression of human neutrophil lipocalin cDNA derived from bone marrow and ovarian cancer cells.</title>
        <authorList>
            <person name="Bartsch S."/>
            <person name="Tschesche H."/>
        </authorList>
    </citation>
    <scope>NUCLEOTIDE SEQUENCE [MRNA] OF 21-198</scope>
    <scope>PARTIAL PROTEIN SEQUENCE</scope>
</reference>
<reference key="9">
    <citation type="journal article" date="1993" name="J. Biol. Chem.">
        <title>Isolation and primary structure of NGAL, a novel protein associated with human neutrophil gelatinase.</title>
        <authorList>
            <person name="Kjeldsen L."/>
            <person name="Johnsen A.H."/>
            <person name="Sengelov H."/>
            <person name="Borregaard N."/>
        </authorList>
    </citation>
    <scope>PROTEIN SEQUENCE OF 21-198</scope>
    <scope>SUBCELLULAR LOCATION</scope>
    <scope>IDENTIFICATION BY MASS SPECTROMETRY</scope>
    <scope>PYROGLUTAMATE FORMATION AT GLN-21</scope>
    <scope>INTERACTION WITH MMP9</scope>
    <scope>GLYCOSYLATION AT ASN-85</scope>
    <scope>TISSUE SPECIFICITY</scope>
    <source>
        <tissue>Neutrophil</tissue>
    </source>
</reference>
<reference key="10">
    <citation type="journal article" date="1992" name="FEBS Lett.">
        <title>A 25 kDa alpha 2-microglobulin-related protein is a component of the 125 kDa form of human gelatinase.</title>
        <authorList>
            <person name="Triebel S."/>
            <person name="Blaeser J."/>
            <person name="Reinke H."/>
            <person name="Tschesche H."/>
        </authorList>
    </citation>
    <scope>PROTEIN SEQUENCE OF 51-61; 71-90; 132-136; 152-160 AND 178-192</scope>
    <scope>SUBUNIT</scope>
    <scope>INTERACTION WITH MMP9</scope>
    <source>
        <tissue>Neutrophil</tissue>
    </source>
</reference>
<reference key="11">
    <citation type="journal article" date="1994" name="Blood">
        <title>Identification of neutrophil gelatinase-associated lipocalin as a novel matrix protein of specific granules in human neutrophils.</title>
        <authorList>
            <person name="Kjeldsen L."/>
            <person name="Bainton D.F."/>
            <person name="Sengeloev H."/>
            <person name="Borregaard N."/>
        </authorList>
    </citation>
    <scope>SUBCELLULAR LOCATION</scope>
    <scope>TISSUE SPECIFICITY</scope>
</reference>
<reference key="12">
    <citation type="journal article" date="2002" name="Mol. Cell">
        <title>An iron delivery pathway mediated by a lipocalin.</title>
        <authorList>
            <person name="Yang J."/>
            <person name="Goetz D."/>
            <person name="Li J.Y."/>
            <person name="Wang W."/>
            <person name="Mori K."/>
            <person name="Setlik D."/>
            <person name="Du T."/>
            <person name="Erdjument-Bromage H."/>
            <person name="Tempst P."/>
            <person name="Strong R."/>
            <person name="Barasch J."/>
        </authorList>
    </citation>
    <scope>FUNCTION</scope>
    <scope>IRON-BINDING</scope>
    <scope>SIDEROPHORE-BINDING</scope>
    <scope>SUBCELLULAR LOCATION</scope>
</reference>
<reference key="13">
    <citation type="journal article" date="2004" name="Mol. Cell. Proteomics">
        <title>A proteomic analysis of human bile.</title>
        <authorList>
            <person name="Kristiansen T.Z."/>
            <person name="Bunkenborg J."/>
            <person name="Gronborg M."/>
            <person name="Molina H."/>
            <person name="Thuluvath P.J."/>
            <person name="Argani P."/>
            <person name="Goggins M.G."/>
            <person name="Maitra A."/>
            <person name="Pandey A."/>
        </authorList>
    </citation>
    <scope>GLYCOSYLATION [LARGE SCALE ANALYSIS] AT ASN-85</scope>
    <source>
        <tissue>Bile</tissue>
    </source>
</reference>
<reference key="14">
    <citation type="journal article" date="2005" name="J. Proteome Res.">
        <title>Human plasma N-glycoproteome analysis by immunoaffinity subtraction, hydrazide chemistry, and mass spectrometry.</title>
        <authorList>
            <person name="Liu T."/>
            <person name="Qian W.-J."/>
            <person name="Gritsenko M.A."/>
            <person name="Camp D.G. II"/>
            <person name="Monroe M.E."/>
            <person name="Moore R.J."/>
            <person name="Smith R.D."/>
        </authorList>
    </citation>
    <scope>GLYCOSYLATION [LARGE SCALE ANALYSIS] AT ASN-85</scope>
    <source>
        <tissue>Plasma</tissue>
    </source>
</reference>
<reference key="15">
    <citation type="journal article" date="2006" name="J. Proteome Res.">
        <title>Identification of N-linked glycoproteins in human saliva by glycoprotein capture and mass spectrometry.</title>
        <authorList>
            <person name="Ramachandran P."/>
            <person name="Boontheung P."/>
            <person name="Xie Y."/>
            <person name="Sondej M."/>
            <person name="Wong D.T."/>
            <person name="Loo J.A."/>
        </authorList>
    </citation>
    <scope>GLYCOSYLATION [LARGE SCALE ANALYSIS] AT ASN-85</scope>
    <source>
        <tissue>Saliva</tissue>
    </source>
</reference>
<reference key="16">
    <citation type="journal article" date="2009" name="EMBO J.">
        <title>Transcription and signalling pathways involved in BCR-ABL-mediated misregulation of 24p3 and 24p3R.</title>
        <authorList>
            <person name="Sheng Z."/>
            <person name="Wang S.Z."/>
            <person name="Green M.R."/>
        </authorList>
    </citation>
    <scope>INDUCTION</scope>
</reference>
<reference key="17">
    <citation type="journal article" date="2009" name="J. Proteome Res.">
        <title>Glycoproteomics analysis of human liver tissue by combination of multiple enzyme digestion and hydrazide chemistry.</title>
        <authorList>
            <person name="Chen R."/>
            <person name="Jiang X."/>
            <person name="Sun D."/>
            <person name="Han G."/>
            <person name="Wang F."/>
            <person name="Ye M."/>
            <person name="Wang L."/>
            <person name="Zou H."/>
        </authorList>
    </citation>
    <scope>GLYCOSYLATION [LARGE SCALE ANALYSIS] AT ASN-85</scope>
    <source>
        <tissue>Liver</tissue>
    </source>
</reference>
<reference key="18">
    <citation type="journal article" date="2016" name="J. Biol. Chem.">
        <title>Human Metabolome-derived Cofactors Are Required for the Antibacterial Activity of Siderocalin in Urine.</title>
        <authorList>
            <person name="Shields-Cutler R.R."/>
            <person name="Crowley J.R."/>
            <person name="Miller C.D."/>
            <person name="Stapleton A.E."/>
            <person name="Cui W."/>
            <person name="Henderson J.P."/>
        </authorList>
    </citation>
    <scope>FUNCTION</scope>
    <scope>SUBCELLULAR LOCATION</scope>
</reference>
<reference key="19">
    <citation type="journal article" date="2011" name="BMC Syst. Biol.">
        <title>Initial characterization of the human central proteome.</title>
        <authorList>
            <person name="Burkard T.R."/>
            <person name="Planyavsky M."/>
            <person name="Kaupe I."/>
            <person name="Breitwieser F.P."/>
            <person name="Buerckstuemmer T."/>
            <person name="Bennett K.L."/>
            <person name="Superti-Furga G."/>
            <person name="Colinge J."/>
        </authorList>
    </citation>
    <scope>IDENTIFICATION BY MASS SPECTROMETRY [LARGE SCALE ANALYSIS]</scope>
</reference>
<reference key="20">
    <citation type="journal article" date="2018" name="J. Clin. Invest.">
        <title>Insulin receptor signaling regulates renal collecting duct and intercalated cell antibacterial defenses.</title>
        <authorList>
            <person name="Murtha M.J."/>
            <person name="Eichler T."/>
            <person name="Bender K."/>
            <person name="Metheny J."/>
            <person name="Li B."/>
            <person name="Schwaderer A.L."/>
            <person name="Mosquera C."/>
            <person name="James C."/>
            <person name="Schwartz L."/>
            <person name="Becknell B."/>
            <person name="Spencer J.D."/>
        </authorList>
    </citation>
    <scope>TISSUE SPECIFICITY</scope>
    <scope>INDUCTION</scope>
</reference>
<reference key="21">
    <citation type="journal article" date="2000" name="Biochemistry">
        <title>Ligand preference inferred from the structure of neutrophil gelatinase associated lipocalin.</title>
        <authorList>
            <person name="Goetz D.H."/>
            <person name="Willie S.T."/>
            <person name="Armen R.S."/>
            <person name="Bratt T."/>
            <person name="Borregaard N."/>
            <person name="Strong R.K."/>
        </authorList>
    </citation>
    <scope>X-RAY CRYSTALLOGRAPHY (2.40 ANGSTROMS) OF 24-197</scope>
    <scope>GLYCOSYLATION AT ASN-85</scope>
    <scope>DISULFIDE BONDS</scope>
</reference>
<reference key="22">
    <citation type="journal article" date="1999" name="J. Mol. Biol.">
        <title>The solution structure and dynamics of human neutrophil gelatinase-associated lipocalin.</title>
        <authorList>
            <person name="Coles M."/>
            <person name="Diercks T."/>
            <person name="Muehlenweg B."/>
            <person name="Bartsch S."/>
            <person name="Zolzer V."/>
            <person name="Tschesche H."/>
            <person name="Kessler H."/>
        </authorList>
    </citation>
    <scope>STRUCTURE BY NMR OF 21-198</scope>
    <scope>DISULFIDE BONDS</scope>
</reference>
<reference key="23">
    <citation type="journal article" date="2002" name="Mol. Cell">
        <title>The neutrophil lipocalin NGAL is a bacteriostatic agent that interferes with siderophore-mediated iron acquisition.</title>
        <authorList>
            <person name="Goetz D.H."/>
            <person name="Holmes M.A."/>
            <person name="Borregaard N."/>
            <person name="Bluhm M.E."/>
            <person name="Raymond K.N."/>
            <person name="Strong R.K."/>
        </authorList>
    </citation>
    <scope>X-RAY CRYSTALLOGRAPHY (2.4 ANGSTROMS) OF 21-198 IN COMPLEX WITH SIDEROPHORE AND IRON</scope>
    <scope>SUBUNIT</scope>
    <scope>DISULFIDE BOND</scope>
</reference>
<reference evidence="31 32 33" key="24">
    <citation type="journal article" date="2005" name="Structure">
        <title>Siderocalin (Lcn 2) also binds carboxymycobactins, potentially defending against mycobacterial infections through iron sequestration.</title>
        <authorList>
            <person name="Holmes M.A."/>
            <person name="Paulsene W."/>
            <person name="Jide X."/>
            <person name="Ratledge C."/>
            <person name="Strong R.K."/>
        </authorList>
    </citation>
    <scope>X-RAY CRYSTALLOGRAPHY (2.10 ANGSTROMS) OF 21-198 IN COMPLEXES WITH CARBOXYMYCOBACTIN S AND CARBOXYMYCOBACTIN T</scope>
    <scope>FUNCTION</scope>
    <scope>DISULFIDE BONDS</scope>
</reference>
<reference evidence="36" key="25">
    <citation type="submission" date="2008-03" db="PDB data bank">
        <title>Structural Studies of Human Siderocalin.</title>
        <authorList>
            <person name="Clifton M.C."/>
            <person name="Pizzaro J.C."/>
            <person name="Abergel R."/>
            <person name="Hoette T."/>
            <person name="Vigdorovich V."/>
            <person name="Raymond K."/>
            <person name="Strong R.K."/>
        </authorList>
    </citation>
    <scope>X-RAY CRYSTALLOGRAPHY (2.80 ANGSTROMS) IN COMPLEX WITH ENTEROBACTIN</scope>
    <scope>DISULFIDE BONDS</scope>
</reference>
<reference evidence="39 40" key="26">
    <citation type="journal article" date="2010" name="Nat. Chem. Biol.">
        <title>Iron traffics in circulation bound to a siderocalin (Ngal)-catechol complex.</title>
        <authorList>
            <person name="Bao G."/>
            <person name="Clifton M."/>
            <person name="Hoette T.M."/>
            <person name="Mori K."/>
            <person name="Deng S.X."/>
            <person name="Qiu A."/>
            <person name="Viltard M."/>
            <person name="Williams D."/>
            <person name="Paragas N."/>
            <person name="Leete T."/>
            <person name="Kulkarni R."/>
            <person name="Li X."/>
            <person name="Lee B."/>
            <person name="Kalandadze A."/>
            <person name="Ratner A.J."/>
            <person name="Pizarro J.C."/>
            <person name="Schmidt-Ott K.M."/>
            <person name="Landry D.W."/>
            <person name="Raymond K.N."/>
            <person name="Strong R.K."/>
            <person name="Barasch J."/>
        </authorList>
    </citation>
    <scope>X-RAY CRYSTALLOGRAPHY (2.30 ANGSTROMS) OF 21-198</scope>
    <scope>FUNCTION</scope>
    <scope>SUBCELLULAR LOCATION</scope>
    <scope>MUTAGENESIS OF LYS-145 AND LYS-154</scope>
    <scope>DISULFIDE BONDS</scope>
</reference>
<reference evidence="47 48" key="27">
    <citation type="journal article" date="2011" name="ACS Chem. Biol.">
        <title>Immune interference in Mycobacterium tuberculosis intracellular iron acquisition through siderocalin recognition of carboxymycobactins.</title>
        <authorList>
            <person name="Hoette T.M."/>
            <person name="Clifton M.C."/>
            <person name="Zawadzka A.M."/>
            <person name="Holmes M.A."/>
            <person name="Strong R.K."/>
            <person name="Raymond K.N."/>
        </authorList>
    </citation>
    <scope>X-RAY CRYSTALLOGRAPHY (2.19 ANGSTROMS) OF 21-198</scope>
    <scope>FUNCTION</scope>
    <scope>DISULFIDE BONDS</scope>
</reference>
<gene>
    <name type="primary">LCN2</name>
    <name type="synonym">HNL</name>
    <name evidence="24" type="synonym">NGAL</name>
</gene>
<organism>
    <name type="scientific">Homo sapiens</name>
    <name type="common">Human</name>
    <dbReference type="NCBI Taxonomy" id="9606"/>
    <lineage>
        <taxon>Eukaryota</taxon>
        <taxon>Metazoa</taxon>
        <taxon>Chordata</taxon>
        <taxon>Craniata</taxon>
        <taxon>Vertebrata</taxon>
        <taxon>Euteleostomi</taxon>
        <taxon>Mammalia</taxon>
        <taxon>Eutheria</taxon>
        <taxon>Euarchontoglires</taxon>
        <taxon>Primates</taxon>
        <taxon>Haplorrhini</taxon>
        <taxon>Catarrhini</taxon>
        <taxon>Hominidae</taxon>
        <taxon>Homo</taxon>
    </lineage>
</organism>